<accession>P12823</accession>
<accession>Q88646</accession>
<accession>Q88647</accession>
<accession>Q88648</accession>
<accession>Q88649</accession>
<accession>Q88650</accession>
<accession>Q88651</accession>
<accession>Q88652</accession>
<accession>Q88653</accession>
<accession>Q88654</accession>
<accession>Q88655</accession>
<feature type="chain" id="PRO_0000405217" description="Genome polyprotein">
    <location>
        <begin position="1"/>
        <end position="3388"/>
    </location>
</feature>
<feature type="chain" id="PRO_0000037969" description="Capsid protein C" evidence="6">
    <location>
        <begin position="1"/>
        <end position="100"/>
    </location>
</feature>
<feature type="propeptide" id="PRO_0000037970" description="ER anchor for the capsid protein C, removed in mature form by serine protease NS3" evidence="6">
    <location>
        <begin position="101"/>
        <end position="114"/>
    </location>
</feature>
<feature type="chain" id="PRO_0000308286" description="Protein prM" evidence="6">
    <location>
        <begin position="115"/>
        <end position="280"/>
    </location>
</feature>
<feature type="chain" id="PRO_0000308287" description="Peptide pr" evidence="6">
    <location>
        <begin position="115"/>
        <end position="205"/>
    </location>
</feature>
<feature type="chain" id="PRO_0000037971" description="Small envelope protein M" evidence="6">
    <location>
        <begin position="206"/>
        <end position="280"/>
    </location>
</feature>
<feature type="chain" id="PRO_0000037972" description="Envelope protein E" evidence="6">
    <location>
        <begin position="281"/>
        <end position="775"/>
    </location>
</feature>
<feature type="chain" id="PRO_0000037973" description="Non-structural protein 1" evidence="6">
    <location>
        <begin position="776"/>
        <end position="1127"/>
    </location>
</feature>
<feature type="chain" id="PRO_0000037974" description="Non-structural protein 2A" evidence="6">
    <location>
        <begin position="1128"/>
        <end position="1345"/>
    </location>
</feature>
<feature type="chain" id="PRO_0000037975" description="Serine protease subunit NS2B" evidence="6">
    <location>
        <begin position="1346"/>
        <end position="1475"/>
    </location>
</feature>
<feature type="chain" id="PRO_0000037976" description="Serine protease NS3" evidence="6">
    <location>
        <begin position="1476"/>
        <end position="2090"/>
    </location>
</feature>
<feature type="chain" id="PRO_0000037977" description="Non-structural protein 4A" evidence="6">
    <location>
        <begin position="2091"/>
        <end position="2217"/>
    </location>
</feature>
<feature type="peptide" id="PRO_0000308289" description="Peptide 2k" evidence="6">
    <location>
        <begin position="2218"/>
        <end position="2240"/>
    </location>
</feature>
<feature type="chain" id="PRO_0000037978" description="Non-structural protein 4B" evidence="6">
    <location>
        <begin position="2241"/>
        <end position="2488"/>
    </location>
</feature>
<feature type="chain" id="PRO_0000037979" description="RNA-directed RNA polymerase NS5" evidence="6">
    <location>
        <begin position="2489"/>
        <end position="3388"/>
    </location>
</feature>
<feature type="topological domain" description="Cytoplasmic" evidence="11">
    <location>
        <begin position="1"/>
        <end position="101"/>
    </location>
</feature>
<feature type="transmembrane region" description="Helical" evidence="11">
    <location>
        <begin position="102"/>
        <end position="122"/>
    </location>
</feature>
<feature type="topological domain" description="Extracellular" evidence="11">
    <location>
        <begin position="123"/>
        <end position="238"/>
    </location>
</feature>
<feature type="transmembrane region" description="Helical" evidence="11">
    <location>
        <begin position="239"/>
        <end position="259"/>
    </location>
</feature>
<feature type="topological domain" description="Cytoplasmic" evidence="11">
    <location>
        <begin position="260"/>
        <end position="265"/>
    </location>
</feature>
<feature type="transmembrane region" description="Helical" evidence="11">
    <location>
        <begin position="266"/>
        <end position="280"/>
    </location>
</feature>
<feature type="topological domain" description="Extracellular" evidence="11">
    <location>
        <begin position="281"/>
        <end position="725"/>
    </location>
</feature>
<feature type="transmembrane region" description="Helical" evidence="11">
    <location>
        <begin position="726"/>
        <end position="746"/>
    </location>
</feature>
<feature type="topological domain" description="Cytoplasmic" evidence="11">
    <location>
        <begin position="747"/>
        <end position="752"/>
    </location>
</feature>
<feature type="transmembrane region" description="Helical" evidence="11">
    <location>
        <begin position="753"/>
        <end position="773"/>
    </location>
</feature>
<feature type="topological domain" description="Extracellular" evidence="11">
    <location>
        <begin position="774"/>
        <end position="1195"/>
    </location>
</feature>
<feature type="transmembrane region" description="Helical" evidence="11">
    <location>
        <begin position="1196"/>
        <end position="1220"/>
    </location>
</feature>
<feature type="topological domain" description="Cytoplasmic" evidence="11">
    <location>
        <begin position="1221"/>
        <end position="1226"/>
    </location>
</feature>
<feature type="transmembrane region" description="Helical" evidence="11">
    <location>
        <begin position="1227"/>
        <end position="1245"/>
    </location>
</feature>
<feature type="topological domain" description="Lumenal" evidence="11">
    <location>
        <begin position="1246"/>
        <end position="1269"/>
    </location>
</feature>
<feature type="transmembrane region" description="Helical" evidence="11">
    <location>
        <begin position="1270"/>
        <end position="1290"/>
    </location>
</feature>
<feature type="topological domain" description="Cytoplasmic" evidence="11">
    <location>
        <position position="1291"/>
    </location>
</feature>
<feature type="transmembrane region" description="Helical" evidence="11">
    <location>
        <begin position="1292"/>
        <end position="1310"/>
    </location>
</feature>
<feature type="topological domain" description="Lumenal" evidence="11">
    <location>
        <begin position="1311"/>
        <end position="1317"/>
    </location>
</feature>
<feature type="transmembrane region" description="Helical" evidence="11">
    <location>
        <begin position="1318"/>
        <end position="1338"/>
    </location>
</feature>
<feature type="topological domain" description="Cytoplasmic" evidence="11">
    <location>
        <begin position="1339"/>
        <end position="1346"/>
    </location>
</feature>
<feature type="transmembrane region" description="Helical" evidence="11">
    <location>
        <begin position="1347"/>
        <end position="1367"/>
    </location>
</feature>
<feature type="topological domain" description="Lumenal" evidence="11">
    <location>
        <begin position="1368"/>
        <end position="1370"/>
    </location>
</feature>
<feature type="transmembrane region" description="Helical" evidence="11">
    <location>
        <begin position="1371"/>
        <end position="1391"/>
    </location>
</feature>
<feature type="topological domain" description="Cytoplasmic" evidence="11">
    <location>
        <begin position="1392"/>
        <end position="1447"/>
    </location>
</feature>
<feature type="intramembrane region" description="Helical" evidence="11">
    <location>
        <begin position="1448"/>
        <end position="1468"/>
    </location>
</feature>
<feature type="topological domain" description="Cytoplasmic" evidence="11">
    <location>
        <begin position="1469"/>
        <end position="2144"/>
    </location>
</feature>
<feature type="transmembrane region" description="Helical" evidence="11">
    <location>
        <begin position="2145"/>
        <end position="2165"/>
    </location>
</feature>
<feature type="topological domain" description="Lumenal" evidence="11">
    <location>
        <begin position="2166"/>
        <end position="2167"/>
    </location>
</feature>
<feature type="intramembrane region" description="Helical" evidence="11">
    <location>
        <begin position="2168"/>
        <end position="2188"/>
    </location>
</feature>
<feature type="topological domain" description="Lumenal" evidence="11">
    <location>
        <position position="2189"/>
    </location>
</feature>
<feature type="transmembrane region" description="Helical" evidence="11">
    <location>
        <begin position="2190"/>
        <end position="2210"/>
    </location>
</feature>
<feature type="topological domain" description="Cytoplasmic" evidence="11">
    <location>
        <begin position="2211"/>
        <end position="2225"/>
    </location>
</feature>
<feature type="transmembrane region" description="Helical; Note=Signal for NS4B" evidence="11">
    <location>
        <begin position="2226"/>
        <end position="2246"/>
    </location>
</feature>
<feature type="topological domain" description="Lumenal" evidence="11">
    <location>
        <begin position="2247"/>
        <end position="2271"/>
    </location>
</feature>
<feature type="intramembrane region" description="Helical" evidence="11">
    <location>
        <begin position="2272"/>
        <end position="2292"/>
    </location>
</feature>
<feature type="topological domain" description="Lumenal" evidence="11">
    <location>
        <begin position="2293"/>
        <end position="2313"/>
    </location>
</feature>
<feature type="intramembrane region" description="Helical" evidence="11">
    <location>
        <begin position="2314"/>
        <end position="2334"/>
    </location>
</feature>
<feature type="topological domain" description="Lumenal" evidence="11">
    <location>
        <begin position="2335"/>
        <end position="2344"/>
    </location>
</feature>
<feature type="transmembrane region" description="Helical" evidence="11">
    <location>
        <begin position="2345"/>
        <end position="2365"/>
    </location>
</feature>
<feature type="topological domain" description="Cytoplasmic" evidence="11">
    <location>
        <begin position="2366"/>
        <end position="2410"/>
    </location>
</feature>
<feature type="transmembrane region" description="Helical" evidence="11">
    <location>
        <begin position="2411"/>
        <end position="2431"/>
    </location>
</feature>
<feature type="topological domain" description="Lumenal" evidence="11">
    <location>
        <begin position="2432"/>
        <end position="2456"/>
    </location>
</feature>
<feature type="transmembrane region" description="Helical" evidence="11">
    <location>
        <begin position="2457"/>
        <end position="2477"/>
    </location>
</feature>
<feature type="topological domain" description="Cytoplasmic" evidence="11">
    <location>
        <begin position="2478"/>
        <end position="3388"/>
    </location>
</feature>
<feature type="domain" description="Peptidase S7" evidence="17">
    <location>
        <begin position="1476"/>
        <end position="1653"/>
    </location>
</feature>
<feature type="domain" description="Helicase ATP-binding" evidence="14">
    <location>
        <begin position="1655"/>
        <end position="1811"/>
    </location>
</feature>
<feature type="domain" description="Helicase C-terminal" evidence="15">
    <location>
        <begin position="1821"/>
        <end position="1988"/>
    </location>
</feature>
<feature type="domain" description="mRNA cap 0-1 NS5-type MT" evidence="18">
    <location>
        <begin position="2490"/>
        <end position="2752"/>
    </location>
</feature>
<feature type="domain" description="RdRp catalytic" evidence="13">
    <location>
        <begin position="3017"/>
        <end position="3166"/>
    </location>
</feature>
<feature type="region of interest" description="Interaction with host EXOC1" evidence="5">
    <location>
        <begin position="1"/>
        <end position="15"/>
    </location>
</feature>
<feature type="region of interest" description="Hydrophobic; homodimerization of capsid protein C" evidence="6">
    <location>
        <begin position="37"/>
        <end position="72"/>
    </location>
</feature>
<feature type="region of interest" description="Fusion peptide" evidence="3">
    <location>
        <begin position="378"/>
        <end position="391"/>
    </location>
</feature>
<feature type="region of interest" description="Interacts with and activates NS3 protease" evidence="16">
    <location>
        <begin position="1398"/>
        <end position="1437"/>
    </location>
</feature>
<feature type="region of interest" description="Important for RNA-binding" evidence="4">
    <location>
        <begin position="1659"/>
        <end position="1662"/>
    </location>
</feature>
<feature type="short sequence motif" description="DEAH box" evidence="14">
    <location>
        <begin position="1759"/>
        <end position="1762"/>
    </location>
</feature>
<feature type="short sequence motif" description="SUMO-interacting motif" evidence="6">
    <location>
        <begin position="2565"/>
        <end position="2568"/>
    </location>
</feature>
<feature type="active site" description="Charge relay system; for serine protease NS3 activity" evidence="17">
    <location>
        <position position="1526"/>
    </location>
</feature>
<feature type="active site" description="Charge relay system; for serine protease NS3 activity" evidence="17">
    <location>
        <position position="1550"/>
    </location>
</feature>
<feature type="active site" description="Charge relay system; for serine protease NS3 activity" evidence="17">
    <location>
        <position position="1610"/>
    </location>
</feature>
<feature type="active site" description="For 2'-O-MTase activity" evidence="9">
    <location>
        <position position="2549"/>
    </location>
</feature>
<feature type="active site" description="For 2'-O-MTase activity" evidence="9">
    <location>
        <position position="2634"/>
    </location>
</feature>
<feature type="active site" description="For 2'-O-MTase activity" evidence="9">
    <location>
        <position position="2669"/>
    </location>
</feature>
<feature type="active site" description="For 2'-O-MTase activity" evidence="9">
    <location>
        <position position="2705"/>
    </location>
</feature>
<feature type="binding site" evidence="14">
    <location>
        <begin position="1668"/>
        <end position="1675"/>
    </location>
    <ligand>
        <name>ATP</name>
        <dbReference type="ChEBI" id="CHEBI:30616"/>
    </ligand>
</feature>
<feature type="binding site" evidence="18">
    <location>
        <position position="2544"/>
    </location>
    <ligand>
        <name>S-adenosyl-L-methionine</name>
        <dbReference type="ChEBI" id="CHEBI:59789"/>
    </ligand>
</feature>
<feature type="binding site" evidence="18">
    <location>
        <position position="2574"/>
    </location>
    <ligand>
        <name>S-adenosyl-L-methionine</name>
        <dbReference type="ChEBI" id="CHEBI:59789"/>
    </ligand>
</feature>
<feature type="binding site" evidence="18">
    <location>
        <position position="2575"/>
    </location>
    <ligand>
        <name>S-adenosyl-L-methionine</name>
        <dbReference type="ChEBI" id="CHEBI:59789"/>
    </ligand>
</feature>
<feature type="binding site" evidence="18">
    <location>
        <position position="2592"/>
    </location>
    <ligand>
        <name>S-adenosyl-L-methionine</name>
        <dbReference type="ChEBI" id="CHEBI:59789"/>
    </ligand>
</feature>
<feature type="binding site" evidence="18">
    <location>
        <position position="2593"/>
    </location>
    <ligand>
        <name>S-adenosyl-L-methionine</name>
        <dbReference type="ChEBI" id="CHEBI:59789"/>
    </ligand>
</feature>
<feature type="binding site" evidence="18">
    <location>
        <position position="2619"/>
    </location>
    <ligand>
        <name>S-adenosyl-L-methionine</name>
        <dbReference type="ChEBI" id="CHEBI:59789"/>
    </ligand>
</feature>
<feature type="binding site" evidence="18">
    <location>
        <position position="2620"/>
    </location>
    <ligand>
        <name>S-adenosyl-L-methionine</name>
        <dbReference type="ChEBI" id="CHEBI:59789"/>
    </ligand>
</feature>
<feature type="binding site" evidence="18">
    <location>
        <position position="2635"/>
    </location>
    <ligand>
        <name>S-adenosyl-L-methionine</name>
        <dbReference type="ChEBI" id="CHEBI:59789"/>
    </ligand>
</feature>
<feature type="binding site" evidence="18">
    <location>
        <position position="2707"/>
    </location>
    <ligand>
        <name>S-adenosyl-L-methionine</name>
        <dbReference type="ChEBI" id="CHEBI:59789"/>
    </ligand>
</feature>
<feature type="binding site" evidence="9">
    <location>
        <position position="2926"/>
    </location>
    <ligand>
        <name>Zn(2+)</name>
        <dbReference type="ChEBI" id="CHEBI:29105"/>
        <label>1</label>
    </ligand>
</feature>
<feature type="binding site" evidence="9">
    <location>
        <position position="2930"/>
    </location>
    <ligand>
        <name>Zn(2+)</name>
        <dbReference type="ChEBI" id="CHEBI:29105"/>
        <label>1</label>
    </ligand>
</feature>
<feature type="binding site" evidence="9">
    <location>
        <position position="2935"/>
    </location>
    <ligand>
        <name>Zn(2+)</name>
        <dbReference type="ChEBI" id="CHEBI:29105"/>
        <label>1</label>
    </ligand>
</feature>
<feature type="binding site" evidence="9">
    <location>
        <position position="2938"/>
    </location>
    <ligand>
        <name>Zn(2+)</name>
        <dbReference type="ChEBI" id="CHEBI:29105"/>
        <label>1</label>
    </ligand>
</feature>
<feature type="binding site" evidence="9">
    <location>
        <position position="3200"/>
    </location>
    <ligand>
        <name>Zn(2+)</name>
        <dbReference type="ChEBI" id="CHEBI:29105"/>
        <label>2</label>
    </ligand>
</feature>
<feature type="binding site" evidence="9">
    <location>
        <position position="3216"/>
    </location>
    <ligand>
        <name>Zn(2+)</name>
        <dbReference type="ChEBI" id="CHEBI:29105"/>
        <label>2</label>
    </ligand>
</feature>
<feature type="binding site" evidence="9">
    <location>
        <position position="3335"/>
    </location>
    <ligand>
        <name>Zn(2+)</name>
        <dbReference type="ChEBI" id="CHEBI:29105"/>
        <label>2</label>
    </ligand>
</feature>
<feature type="site" description="Cleavage; by viral protease NS3" evidence="6">
    <location>
        <begin position="100"/>
        <end position="101"/>
    </location>
</feature>
<feature type="site" description="Cleavage; by host signal peptidase" evidence="6">
    <location>
        <begin position="114"/>
        <end position="115"/>
    </location>
</feature>
<feature type="site" description="Cleavage; by host furin" evidence="6 11">
    <location>
        <begin position="205"/>
        <end position="206"/>
    </location>
</feature>
<feature type="site" description="Cleavage; by host signal peptidase" evidence="6">
    <location>
        <begin position="280"/>
        <end position="281"/>
    </location>
</feature>
<feature type="site" description="Cleavage; by host signal peptidase" evidence="6">
    <location>
        <begin position="775"/>
        <end position="776"/>
    </location>
</feature>
<feature type="site" description="Cleavage; by host" evidence="6">
    <location>
        <begin position="1127"/>
        <end position="1128"/>
    </location>
</feature>
<feature type="site" description="Cleavage; by viral protease NS3" evidence="6">
    <location>
        <begin position="1345"/>
        <end position="1346"/>
    </location>
</feature>
<feature type="site" description="Cleavage; by autolysis" evidence="6">
    <location>
        <begin position="1475"/>
        <end position="1476"/>
    </location>
</feature>
<feature type="site" description="Involved in NS3 ATPase and RTPase activities" evidence="2">
    <location>
        <position position="1932"/>
    </location>
</feature>
<feature type="site" description="Involved in NS3 ATPase and RTPase activities" evidence="2">
    <location>
        <position position="1935"/>
    </location>
</feature>
<feature type="site" description="Cleavage; by autolysis" evidence="6">
    <location>
        <begin position="2090"/>
        <end position="2091"/>
    </location>
</feature>
<feature type="site" description="Cleavage; by viral protease NS3" evidence="6">
    <location>
        <begin position="2217"/>
        <end position="2218"/>
    </location>
</feature>
<feature type="site" description="Cleavage; by host signal peptidase" evidence="6">
    <location>
        <begin position="2240"/>
        <end position="2241"/>
    </location>
</feature>
<feature type="site" description="Cleavage; by viral protease NS3" evidence="6">
    <location>
        <begin position="2488"/>
        <end position="2489"/>
    </location>
</feature>
<feature type="site" description="mRNA cap binding" evidence="18">
    <location>
        <position position="2502"/>
    </location>
</feature>
<feature type="site" description="mRNA cap binding; via carbonyl oxygen" evidence="18">
    <location>
        <position position="2505"/>
    </location>
</feature>
<feature type="site" description="mRNA cap binding" evidence="18">
    <location>
        <position position="2506"/>
    </location>
</feature>
<feature type="site" description="mRNA cap binding; via carbonyl oxygen" evidence="18">
    <location>
        <position position="2508"/>
    </location>
</feature>
<feature type="site" description="mRNA cap binding" evidence="18">
    <location>
        <position position="2513"/>
    </location>
</feature>
<feature type="site" description="mRNA cap binding" evidence="18">
    <location>
        <position position="2517"/>
    </location>
</feature>
<feature type="site" description="Essential for 2'-O-methyltransferase activity" evidence="18">
    <location>
        <position position="2549"/>
    </location>
</feature>
<feature type="site" description="Essential for 2'-O-methyltransferase and N-7 methyltransferase activity" evidence="18">
    <location>
        <position position="2634"/>
    </location>
</feature>
<feature type="site" description="mRNA cap binding" evidence="18">
    <location>
        <position position="2638"/>
    </location>
</feature>
<feature type="site" description="Essential for 2'-O-methyltransferase activity" evidence="18">
    <location>
        <position position="2669"/>
    </location>
</feature>
<feature type="site" description="mRNA cap binding" evidence="18">
    <location>
        <position position="2700"/>
    </location>
</feature>
<feature type="site" description="mRNA cap binding" evidence="18">
    <location>
        <position position="2702"/>
    </location>
</feature>
<feature type="site" description="Essential for 2'-O-methyltransferase activity" evidence="18">
    <location>
        <position position="2705"/>
    </location>
</feature>
<feature type="modified residue" description="N6-acetyllysine; by host" evidence="8">
    <location>
        <position position="1863"/>
    </location>
</feature>
<feature type="modified residue" description="Phosphoserine" evidence="1">
    <location>
        <position position="2544"/>
    </location>
</feature>
<feature type="glycosylation site" description="N-linked (GlcNAc...) asparagine; by host" evidence="12">
    <location>
        <position position="183"/>
    </location>
</feature>
<feature type="glycosylation site" description="N-linked (GlcNAc...) asparagine; by host" evidence="12">
    <location>
        <position position="347"/>
    </location>
</feature>
<feature type="glycosylation site" description="N-linked (GlcNAc...) asparagine; by host" evidence="12">
    <location>
        <position position="433"/>
    </location>
</feature>
<feature type="glycosylation site" description="N-linked (GlcNAc...) asparagine; by host" evidence="12">
    <location>
        <position position="905"/>
    </location>
</feature>
<feature type="glycosylation site" description="N-linked (GlcNAc...) asparagine; by host" evidence="12">
    <location>
        <position position="982"/>
    </location>
</feature>
<feature type="glycosylation site" description="N-linked (GlcNAc...) asparagine; by host" evidence="12">
    <location>
        <position position="1134"/>
    </location>
</feature>
<feature type="glycosylation site" description="N-linked (GlcNAc...) asparagine; by host" evidence="12">
    <location>
        <position position="2298"/>
    </location>
</feature>
<feature type="glycosylation site" description="N-linked (GlcNAc...) asparagine; by host" evidence="12">
    <location>
        <position position="2302"/>
    </location>
</feature>
<feature type="glycosylation site" description="N-linked (GlcNAc...) asparagine; by host" evidence="12">
    <location>
        <position position="2454"/>
    </location>
</feature>
<feature type="disulfide bond" evidence="19">
    <location>
        <begin position="283"/>
        <end position="310"/>
    </location>
</feature>
<feature type="disulfide bond" evidence="19">
    <location>
        <begin position="340"/>
        <end position="401"/>
    </location>
</feature>
<feature type="disulfide bond" evidence="19">
    <location>
        <begin position="354"/>
        <end position="385"/>
    </location>
</feature>
<feature type="disulfide bond" evidence="19">
    <location>
        <begin position="372"/>
        <end position="396"/>
    </location>
</feature>
<feature type="disulfide bond" evidence="19">
    <location>
        <begin position="465"/>
        <end position="565"/>
    </location>
</feature>
<feature type="disulfide bond" evidence="19">
    <location>
        <begin position="582"/>
        <end position="613"/>
    </location>
</feature>
<feature type="disulfide bond" evidence="20">
    <location>
        <begin position="779"/>
        <end position="790"/>
    </location>
</feature>
<feature type="disulfide bond" evidence="20">
    <location>
        <begin position="830"/>
        <end position="918"/>
    </location>
</feature>
<feature type="disulfide bond" evidence="20">
    <location>
        <begin position="954"/>
        <end position="998"/>
    </location>
</feature>
<feature type="disulfide bond" evidence="20">
    <location>
        <begin position="1055"/>
        <end position="1104"/>
    </location>
</feature>
<feature type="disulfide bond" evidence="20">
    <location>
        <begin position="1066"/>
        <end position="1088"/>
    </location>
</feature>
<feature type="disulfide bond" evidence="20">
    <location>
        <begin position="1087"/>
        <end position="1091"/>
    </location>
</feature>
<feature type="sequence conflict" description="In Ref. 5." evidence="21" ref="5">
    <original>D</original>
    <variation>E</variation>
    <location>
        <position position="351"/>
    </location>
</feature>
<feature type="sequence conflict" description="In Ref. 5." evidence="21" ref="5">
    <original>T</original>
    <variation>I</variation>
    <location>
        <position position="615"/>
    </location>
</feature>
<feature type="sequence conflict" description="In Ref. 5." evidence="21" ref="5">
    <original>T</original>
    <variation>I</variation>
    <location>
        <position position="632"/>
    </location>
</feature>
<feature type="sequence conflict" description="In Ref. 5." evidence="21" ref="5">
    <original>D</original>
    <variation>N</variation>
    <location>
        <position position="670"/>
    </location>
</feature>
<feature type="strand" evidence="25">
    <location>
        <begin position="23"/>
        <end position="25"/>
    </location>
</feature>
<feature type="helix" evidence="25">
    <location>
        <begin position="27"/>
        <end position="32"/>
    </location>
</feature>
<feature type="strand" evidence="25">
    <location>
        <begin position="34"/>
        <end position="36"/>
    </location>
</feature>
<feature type="helix" evidence="25">
    <location>
        <begin position="45"/>
        <end position="57"/>
    </location>
</feature>
<feature type="helix" evidence="25">
    <location>
        <begin position="63"/>
        <end position="69"/>
    </location>
</feature>
<feature type="helix" evidence="25">
    <location>
        <begin position="75"/>
        <end position="95"/>
    </location>
</feature>
<feature type="turn" evidence="24">
    <location>
        <begin position="282"/>
        <end position="285"/>
    </location>
</feature>
<feature type="helix" evidence="23">
    <location>
        <begin position="288"/>
        <end position="290"/>
    </location>
</feature>
<feature type="strand" evidence="23">
    <location>
        <begin position="291"/>
        <end position="293"/>
    </location>
</feature>
<feature type="strand" evidence="23">
    <location>
        <begin position="295"/>
        <end position="306"/>
    </location>
</feature>
<feature type="strand" evidence="23">
    <location>
        <begin position="311"/>
        <end position="315"/>
    </location>
</feature>
<feature type="strand" evidence="23">
    <location>
        <begin position="320"/>
        <end position="332"/>
    </location>
</feature>
<feature type="strand" evidence="23">
    <location>
        <begin position="334"/>
        <end position="352"/>
    </location>
</feature>
<feature type="helix" evidence="23">
    <location>
        <begin position="363"/>
        <end position="366"/>
    </location>
</feature>
<feature type="strand" evidence="23">
    <location>
        <begin position="370"/>
        <end position="379"/>
    </location>
</feature>
<feature type="helix" evidence="23">
    <location>
        <begin position="381"/>
        <end position="383"/>
    </location>
</feature>
<feature type="strand" evidence="23">
    <location>
        <begin position="389"/>
        <end position="409"/>
    </location>
</feature>
<feature type="helix" evidence="23">
    <location>
        <begin position="412"/>
        <end position="414"/>
    </location>
</feature>
<feature type="strand" evidence="23">
    <location>
        <begin position="415"/>
        <end position="424"/>
    </location>
</feature>
<feature type="turn" evidence="24">
    <location>
        <begin position="428"/>
        <end position="432"/>
    </location>
</feature>
<feature type="strand" evidence="23">
    <location>
        <begin position="440"/>
        <end position="444"/>
    </location>
</feature>
<feature type="strand" evidence="23">
    <location>
        <begin position="450"/>
        <end position="455"/>
    </location>
</feature>
<feature type="turn" evidence="23">
    <location>
        <begin position="456"/>
        <end position="458"/>
    </location>
</feature>
<feature type="strand" evidence="23">
    <location>
        <begin position="459"/>
        <end position="467"/>
    </location>
</feature>
<feature type="turn" evidence="23">
    <location>
        <begin position="473"/>
        <end position="475"/>
    </location>
</feature>
<feature type="strand" evidence="23">
    <location>
        <begin position="476"/>
        <end position="481"/>
    </location>
</feature>
<feature type="strand" evidence="23">
    <location>
        <begin position="484"/>
        <end position="489"/>
    </location>
</feature>
<feature type="helix" evidence="23">
    <location>
        <begin position="490"/>
        <end position="495"/>
    </location>
</feature>
<feature type="strand" evidence="23">
    <location>
        <begin position="500"/>
        <end position="502"/>
    </location>
</feature>
<feature type="helix" evidence="23">
    <location>
        <begin position="514"/>
        <end position="516"/>
    </location>
</feature>
<feature type="strand" evidence="23">
    <location>
        <begin position="518"/>
        <end position="520"/>
    </location>
</feature>
<feature type="strand" evidence="24">
    <location>
        <begin position="523"/>
        <end position="526"/>
    </location>
</feature>
<feature type="strand" evidence="23">
    <location>
        <begin position="530"/>
        <end position="532"/>
    </location>
</feature>
<feature type="helix" evidence="23">
    <location>
        <begin position="537"/>
        <end position="543"/>
    </location>
</feature>
<feature type="turn" evidence="23">
    <location>
        <begin position="544"/>
        <end position="546"/>
    </location>
</feature>
<feature type="strand" evidence="23">
    <location>
        <begin position="547"/>
        <end position="550"/>
    </location>
</feature>
<feature type="strand" evidence="23">
    <location>
        <begin position="552"/>
        <end position="559"/>
    </location>
</feature>
<feature type="strand" evidence="23">
    <location>
        <begin position="562"/>
        <end position="571"/>
    </location>
</feature>
<feature type="strand" evidence="23">
    <location>
        <begin position="586"/>
        <end position="594"/>
    </location>
</feature>
<feature type="strand" evidence="23">
    <location>
        <begin position="600"/>
        <end position="606"/>
    </location>
</feature>
<feature type="strand" evidence="23">
    <location>
        <begin position="608"/>
        <end position="610"/>
    </location>
</feature>
<feature type="strand" evidence="23">
    <location>
        <begin position="612"/>
        <end position="614"/>
    </location>
</feature>
<feature type="strand" evidence="23">
    <location>
        <begin position="617"/>
        <end position="624"/>
    </location>
</feature>
<feature type="strand" evidence="23">
    <location>
        <begin position="631"/>
        <end position="633"/>
    </location>
</feature>
<feature type="strand" evidence="23">
    <location>
        <begin position="645"/>
        <end position="649"/>
    </location>
</feature>
<feature type="strand" evidence="23">
    <location>
        <begin position="653"/>
        <end position="661"/>
    </location>
</feature>
<feature type="strand" evidence="23">
    <location>
        <begin position="667"/>
        <end position="673"/>
    </location>
</feature>
<feature type="strand" evidence="27">
    <location>
        <begin position="1396"/>
        <end position="1402"/>
    </location>
</feature>
<feature type="helix" evidence="27">
    <location>
        <begin position="1408"/>
        <end position="1413"/>
    </location>
</feature>
<feature type="strand" evidence="27">
    <location>
        <begin position="1414"/>
        <end position="1417"/>
    </location>
</feature>
<feature type="helix" evidence="28">
    <location>
        <begin position="1427"/>
        <end position="1429"/>
    </location>
</feature>
<feature type="strand" evidence="27">
    <location>
        <begin position="1495"/>
        <end position="1504"/>
    </location>
</feature>
<feature type="strand" evidence="27">
    <location>
        <begin position="1507"/>
        <end position="1517"/>
    </location>
</feature>
<feature type="strand" evidence="27">
    <location>
        <begin position="1520"/>
        <end position="1524"/>
    </location>
</feature>
<feature type="helix" evidence="27">
    <location>
        <begin position="1525"/>
        <end position="1528"/>
    </location>
</feature>
<feature type="strand" evidence="27">
    <location>
        <begin position="1533"/>
        <end position="1535"/>
    </location>
</feature>
<feature type="strand" evidence="27">
    <location>
        <begin position="1538"/>
        <end position="1540"/>
    </location>
</feature>
<feature type="strand" evidence="27">
    <location>
        <begin position="1542"/>
        <end position="1546"/>
    </location>
</feature>
<feature type="turn" evidence="27">
    <location>
        <begin position="1547"/>
        <end position="1550"/>
    </location>
</feature>
<feature type="strand" evidence="27">
    <location>
        <begin position="1551"/>
        <end position="1557"/>
    </location>
</feature>
<feature type="strand" evidence="27">
    <location>
        <begin position="1570"/>
        <end position="1574"/>
    </location>
</feature>
<feature type="strand" evidence="27">
    <location>
        <begin position="1582"/>
        <end position="1586"/>
    </location>
</feature>
<feature type="strand" evidence="27">
    <location>
        <begin position="1589"/>
        <end position="1592"/>
    </location>
</feature>
<feature type="strand" evidence="27">
    <location>
        <begin position="1594"/>
        <end position="1601"/>
    </location>
</feature>
<feature type="helix" evidence="27">
    <location>
        <begin position="1607"/>
        <end position="1609"/>
    </location>
</feature>
<feature type="strand" evidence="27">
    <location>
        <begin position="1613"/>
        <end position="1615"/>
    </location>
</feature>
<feature type="strand" evidence="27">
    <location>
        <begin position="1621"/>
        <end position="1625"/>
    </location>
</feature>
<feature type="strand" evidence="27">
    <location>
        <begin position="1628"/>
        <end position="1630"/>
    </location>
</feature>
<feature type="strand" evidence="27">
    <location>
        <begin position="1636"/>
        <end position="1639"/>
    </location>
</feature>
<feature type="helix" evidence="27">
    <location>
        <begin position="1641"/>
        <end position="1643"/>
    </location>
</feature>
<feature type="helix" evidence="22">
    <location>
        <begin position="2497"/>
        <end position="2507"/>
    </location>
</feature>
<feature type="helix" evidence="22">
    <location>
        <begin position="2510"/>
        <end position="2517"/>
    </location>
</feature>
<feature type="turn" evidence="22">
    <location>
        <begin position="2518"/>
        <end position="2520"/>
    </location>
</feature>
<feature type="strand" evidence="22">
    <location>
        <begin position="2522"/>
        <end position="2525"/>
    </location>
</feature>
<feature type="helix" evidence="22">
    <location>
        <begin position="2527"/>
        <end position="2535"/>
    </location>
</feature>
<feature type="strand" evidence="26">
    <location>
        <begin position="2543"/>
        <end position="2545"/>
    </location>
</feature>
<feature type="helix" evidence="22">
    <location>
        <begin position="2546"/>
        <end position="2554"/>
    </location>
</feature>
<feature type="turn" evidence="22">
    <location>
        <begin position="2555"/>
        <end position="2557"/>
    </location>
</feature>
<feature type="strand" evidence="22">
    <location>
        <begin position="2563"/>
        <end position="2568"/>
    </location>
</feature>
<feature type="turn" evidence="22">
    <location>
        <begin position="2571"/>
        <end position="2573"/>
    </location>
</feature>
<feature type="helix" evidence="22">
    <location>
        <begin position="2574"/>
        <end position="2579"/>
    </location>
</feature>
<feature type="strand" evidence="22">
    <location>
        <begin position="2585"/>
        <end position="2591"/>
    </location>
</feature>
<feature type="helix" evidence="22">
    <location>
        <begin position="2609"/>
        <end position="2611"/>
    </location>
</feature>
<feature type="strand" evidence="22">
    <location>
        <begin position="2612"/>
        <end position="2615"/>
    </location>
</feature>
<feature type="helix" evidence="22">
    <location>
        <begin position="2620"/>
        <end position="2622"/>
    </location>
</feature>
<feature type="strand" evidence="22">
    <location>
        <begin position="2629"/>
        <end position="2633"/>
    </location>
</feature>
<feature type="helix" evidence="22">
    <location>
        <begin position="2642"/>
        <end position="2657"/>
    </location>
</feature>
<feature type="strand" evidence="22">
    <location>
        <begin position="2665"/>
        <end position="2671"/>
    </location>
</feature>
<feature type="helix" evidence="22">
    <location>
        <begin position="2676"/>
        <end position="2688"/>
    </location>
</feature>
<feature type="strand" evidence="22">
    <location>
        <begin position="2692"/>
        <end position="2694"/>
    </location>
</feature>
<feature type="strand" evidence="22">
    <location>
        <begin position="2706"/>
        <end position="2709"/>
    </location>
</feature>
<feature type="helix" evidence="22">
    <location>
        <begin position="2716"/>
        <end position="2729"/>
    </location>
</feature>
<feature type="strand" evidence="22">
    <location>
        <begin position="2739"/>
        <end position="2742"/>
    </location>
</feature>
<reference key="1">
    <citation type="journal article" date="1988" name="Virology">
        <title>Nucleotide sequence of dengue 2 RNA and comparison of the encoded proteins with those of other flaviviruses.</title>
        <authorList>
            <person name="Hahn Y.S."/>
            <person name="Galler R."/>
            <person name="Hunkapiller T."/>
            <person name="Dalrymple J.M."/>
            <person name="Strauss J.H."/>
            <person name="Strauss E.G."/>
        </authorList>
    </citation>
    <scope>NUCLEOTIDE SEQUENCE [GENOMIC RNA]</scope>
</reference>
<reference key="2">
    <citation type="journal article" date="1989" name="Virology">
        <title>Definition of the carboxy termini of the three glycoproteins specified by dengue virus type 2.</title>
        <authorList>
            <person name="Wright P.J."/>
            <person name="Cauchi M.R."/>
            <person name="Ng M.L."/>
        </authorList>
    </citation>
    <scope>C-TERMINUS (CAPSID PROTEIN C)</scope>
    <scope>C-TERMINUS (ENVELOPE PROTEIN E)</scope>
    <scope>C-TERMINUS (NON-STRUCTURAL PROTEIN 1)</scope>
    <source>
        <strain>New-Guinea</strain>
    </source>
</reference>
<reference key="3">
    <citation type="journal article" date="2004" name="J. Biol. Chem.">
        <title>Determination of the disulfide bond arrangement of dengue virus NS1 protein.</title>
        <authorList>
            <person name="Wallis T.P."/>
            <person name="Huang C.Y."/>
            <person name="Nimkar S.B."/>
            <person name="Young P.R."/>
            <person name="Gorman J.J."/>
        </authorList>
    </citation>
    <scope>DISULFIDE BOND (NON-STRUCTURAL PROTEIN 1)</scope>
</reference>
<reference key="4">
    <citation type="journal article" date="2002" name="EMBO J.">
        <title>An RNA cap (nucleoside-2'-O-)-methyltransferase in the flavivirus RNA polymerase NS5: crystal structure and functional characterization.</title>
        <authorList>
            <person name="Egloff M.P."/>
            <person name="Benarroch D."/>
            <person name="Selisko B."/>
            <person name="Romette J.L."/>
            <person name="Canard B."/>
        </authorList>
    </citation>
    <scope>X-RAY CRYSTALLOGRAPHY (2.4 ANGSTROMS) OF 2494-2783 IN COMPLEX WITH S-ADENOSYL-L-HOMOCYSTEINE</scope>
    <scope>CHARACTERIZATION OF METHYLTRANSFERASE ACTIVITY (RNA-DIRECTED RNA POLYMERASE NS5)</scope>
</reference>
<reference key="5">
    <citation type="journal article" date="2003" name="Proc. Natl. Acad. Sci. U.S.A.">
        <title>A ligand-binding pocket in the dengue virus envelope glycoprotein.</title>
        <authorList>
            <person name="Modis Y."/>
            <person name="Ogata S."/>
            <person name="Clements D."/>
            <person name="Harrison S.C."/>
        </authorList>
    </citation>
    <scope>X-RAY CRYSTALLOGRAPHY (2.4 ANGSTROMS) OF 281-674</scope>
    <scope>DISULFIDE BONDS (ENVELOPE PROTEIN E)</scope>
</reference>
<reference key="6">
    <citation type="journal article" date="2003" name="EMBO J.">
        <title>Structures of immature flavivirus particles.</title>
        <authorList>
            <person name="Zhang Y."/>
            <person name="Corver J."/>
            <person name="Chipman P.R."/>
            <person name="Zhang W."/>
            <person name="Pletnev S.V."/>
            <person name="Sedlak D."/>
            <person name="Baker T.S."/>
            <person name="Strauss J.H."/>
            <person name="Kuhn R.J."/>
            <person name="Rossmann M.G."/>
        </authorList>
    </citation>
    <scope>STRUCTURE BY ELECTRON MICROSCOPY (16 ANGSTROMS) OF IMMATURE PARTICLES (SMALL ENVELOPE PROTEIN M</scope>
    <scope>ENVELOPE PROTEIN E)</scope>
</reference>
<comment type="function">
    <molecule>Capsid protein C</molecule>
    <text evidence="5">Plays a role in virus budding by binding to the cell membrane and gathering the viral RNA into a nucleocapsid that forms the core of a mature virus particle. During virus entry, may induce genome penetration into the host cytoplasm after hemifusion induced by the surface proteins. Can migrate to the cell nucleus where it modulates host functions. Overcomes the anti-viral effects of host EXOC1 by sequestering and degrading the latter through the proteasome degradation pathway.</text>
</comment>
<comment type="function">
    <molecule>Capsid protein C</molecule>
    <text evidence="1">Inhibits RNA silencing by interfering with host Dicer.</text>
</comment>
<comment type="function">
    <molecule>Peptide pr</molecule>
    <text evidence="5">Prevents premature fusion activity of envelope proteins in trans-Golgi by binding to envelope protein E at pH6.0. After virion release in extracellular space, gets dissociated from E dimers.</text>
</comment>
<comment type="function">
    <molecule>Protein prM</molecule>
    <text evidence="5">Acts as a chaperone for envelope protein E during intracellular virion assembly by masking and inactivating envelope protein E fusion peptide. prM is the only viral peptide matured by host furin in the trans-Golgi network probably to avoid catastrophic activation of the viral fusion activity in acidic Golgi compartment prior to virion release. prM-E cleavage is inefficient, and many virions are only partially matured. These uncleaved prM would play a role in immune evasion.</text>
</comment>
<comment type="function">
    <molecule>Small envelope protein M</molecule>
    <text evidence="5">May play a role in virus budding. Exerts cytotoxic effects by activating a mitochondrial apoptotic pathway through M ectodomain. May display a viroporin activity.</text>
</comment>
<comment type="function">
    <molecule>Envelope protein E</molecule>
    <text evidence="5">Binds to host cell surface receptor and mediates fusion between viral and cellular membranes. Envelope protein is synthesized in the endoplasmic reticulum in the form of heterodimer with protein prM. They play a role in virion budding in the ER, and the newly formed immature particle is covered with 60 spikes composed of heterodimer between precursor prM and envelope protein E. The virion is transported to the Golgi apparatus where the low pH causes dissociation of PrM-E heterodimers and formation of E homodimers. prM-E cleavage is inefficient, and many virions are only partially matured. These uncleaved prM would play a role in immune evasion.</text>
</comment>
<comment type="function">
    <molecule>Non-structural protein 1</molecule>
    <text evidence="5 6">Involved in immune evasion, pathogenesis and viral replication. Once cleaved off the polyprotein, is targeted to three destinations: the viral replication cycle, the plasma membrane and the extracellular compartment. Essential for viral replication. Required for formation of the replication complex and recruitment of other non-structural proteins to the ER-derived membrane structures. Excreted as a hexameric lipoparticle that plays a role against host immune response. Antagonizing the complement function. Binds to the host macrophages and dendritic cells. Inhibits signal transduction originating from Toll-like receptor 3 (TLR3). Mediates complement activation, which may contribute to the pathogenesis of the vascular leakage that occurs in severe dengue disease. Activates autophagy through the AMPK/ERK/mTOR signaling pathway. Mechanistically, acts as the assembly platform for STK11-AMPK interactions and promotes STK11-AMPK interactions. In turn, promotes phosphorylation of the AMPK kinase structural domain and activates AMPK, thereby positively regulating the AMPK/ERK/mTOR signaling pathway and inducing autophagy.</text>
</comment>
<comment type="function">
    <molecule>Non-structural protein 1</molecule>
    <text evidence="5">Disrupts the host endothelial glycocalyx layer of host pulmonary microvascular endothelial cells, inducing degradation of sialic acid and shedding of heparan sulfate proteoglycans. NS1 induces expression of sialidases, heparanase, and activates cathepsin L, which activates heparanase via enzymatic cleavage. These effects are probably linked to the endothelial hyperpermeability observed in severe dengue disease.</text>
</comment>
<comment type="function">
    <molecule>Non-structural protein 2A</molecule>
    <text evidence="5">Component of the viral RNA replication complex that functions in virion assembly and antagonizes the host immune response.</text>
</comment>
<comment type="function">
    <molecule>Serine protease subunit NS2B</molecule>
    <text evidence="5 16">Required cofactor for the serine protease function of NS3. May have membrane-destabilizing activity and form viroporins (By similarity).</text>
</comment>
<comment type="function">
    <molecule>Serine protease NS3</molecule>
    <text evidence="17">Displays three enzymatic activities: serine protease, NTPase and RNA helicase. NS3 serine protease, in association with NS2B, performs its autocleavage and cleaves the polyprotein at dibasic sites in the cytoplasm: C-prM, NS2A-NS2B, NS2B-NS3, NS3-NS4A, NS4A-2K and NS4B-NS5. NS3 RNA helicase binds RNA and unwinds dsRNA in the 3' to 5' direction.</text>
</comment>
<comment type="function">
    <molecule>Non-structural protein 4A</molecule>
    <text evidence="5 7 10">Regulates the ATPase activity of the NS3 helicase activity. NS4A allows NS3 helicase to conserve energy during unwinding. Plays a role in the inhibition of the host innate immune response. Interacts with host MAVS and thereby prevents the interaction between RIGI and MAVS. In turn, IFN-beta production is impaired. Interacts with host AUP1 which mediates induction of lipophagy in host cells and facilitates production of virus progeny particles (By similarity).</text>
</comment>
<comment type="function">
    <molecule>Peptide 2k</molecule>
    <text evidence="5">Functions as a signal peptide for NS4B and is required for the interferon antagonism activity of the latter.</text>
</comment>
<comment type="function">
    <molecule>Non-structural protein 4B</molecule>
    <text evidence="10">Induces the formation of ER-derived membrane vesicles where the viral replication takes place. Inhibits interferon (IFN)-induced host STAT1 phosphorylation and nuclear translocation, thereby preventing the establishment of cellular antiviral state by blocking the IFN-alpha/beta pathway.</text>
</comment>
<comment type="function">
    <molecule>RNA-directed RNA polymerase NS5</molecule>
    <text evidence="5 6">Replicates the viral (+) and (-) RNA genome, and performs the capping of genomes in the cytoplasm. NS5 methylates viral RNA cap at guanine N-7 and ribose 2'-O positions. Besides its role in RNA genome replication, also prevents the establishment of cellular antiviral state by blocking the interferon-alpha/beta (IFN-alpha/beta) signaling pathway. Inhibits host TYK2 and STAT2 phosphorylation, thereby preventing activation of JAK-STAT signaling pathway (By similarity). May reduce immune responses by preventing the recruitment of the host PAF1 complex to interferon-responsive genes (By similarity).</text>
</comment>
<comment type="catalytic activity">
    <reaction>
        <text>Selective hydrolysis of -Xaa-Xaa-|-Yaa- bonds in which each of the Xaa can be either Arg or Lys and Yaa can be either Ser or Ala.</text>
        <dbReference type="EC" id="3.4.21.91"/>
    </reaction>
</comment>
<comment type="catalytic activity">
    <reaction evidence="13">
        <text>RNA(n) + a ribonucleoside 5'-triphosphate = RNA(n+1) + diphosphate</text>
        <dbReference type="Rhea" id="RHEA:21248"/>
        <dbReference type="Rhea" id="RHEA-COMP:14527"/>
        <dbReference type="Rhea" id="RHEA-COMP:17342"/>
        <dbReference type="ChEBI" id="CHEBI:33019"/>
        <dbReference type="ChEBI" id="CHEBI:61557"/>
        <dbReference type="ChEBI" id="CHEBI:140395"/>
        <dbReference type="EC" id="2.7.7.48"/>
    </reaction>
</comment>
<comment type="catalytic activity">
    <reaction>
        <text>a ribonucleoside 5'-triphosphate + H2O = a ribonucleoside 5'-diphosphate + phosphate + H(+)</text>
        <dbReference type="Rhea" id="RHEA:23680"/>
        <dbReference type="ChEBI" id="CHEBI:15377"/>
        <dbReference type="ChEBI" id="CHEBI:15378"/>
        <dbReference type="ChEBI" id="CHEBI:43474"/>
        <dbReference type="ChEBI" id="CHEBI:57930"/>
        <dbReference type="ChEBI" id="CHEBI:61557"/>
        <dbReference type="EC" id="3.6.1.15"/>
    </reaction>
</comment>
<comment type="catalytic activity">
    <reaction>
        <text>ATP + H2O = ADP + phosphate + H(+)</text>
        <dbReference type="Rhea" id="RHEA:13065"/>
        <dbReference type="ChEBI" id="CHEBI:15377"/>
        <dbReference type="ChEBI" id="CHEBI:15378"/>
        <dbReference type="ChEBI" id="CHEBI:30616"/>
        <dbReference type="ChEBI" id="CHEBI:43474"/>
        <dbReference type="ChEBI" id="CHEBI:456216"/>
        <dbReference type="EC" id="3.6.4.13"/>
    </reaction>
</comment>
<comment type="catalytic activity">
    <reaction evidence="18">
        <text>a 5'-end (5'-triphosphoguanosine)-ribonucleoside in mRNA + S-adenosyl-L-methionine = a 5'-end (N(7)-methyl 5'-triphosphoguanosine)-ribonucleoside in mRNA + S-adenosyl-L-homocysteine</text>
        <dbReference type="Rhea" id="RHEA:67008"/>
        <dbReference type="Rhea" id="RHEA-COMP:17166"/>
        <dbReference type="Rhea" id="RHEA-COMP:17167"/>
        <dbReference type="ChEBI" id="CHEBI:57856"/>
        <dbReference type="ChEBI" id="CHEBI:59789"/>
        <dbReference type="ChEBI" id="CHEBI:156461"/>
        <dbReference type="ChEBI" id="CHEBI:167617"/>
        <dbReference type="EC" id="2.1.1.56"/>
    </reaction>
</comment>
<comment type="catalytic activity">
    <reaction evidence="18">
        <text>a 5'-end (N(7)-methyl 5'-triphosphoguanosine)-ribonucleoside in mRNA + S-adenosyl-L-methionine = a 5'-end (N(7)-methyl 5'-triphosphoguanosine)-(2'-O-methyl-ribonucleoside) in mRNA + S-adenosyl-L-homocysteine + H(+)</text>
        <dbReference type="Rhea" id="RHEA:67020"/>
        <dbReference type="Rhea" id="RHEA-COMP:17167"/>
        <dbReference type="Rhea" id="RHEA-COMP:17168"/>
        <dbReference type="ChEBI" id="CHEBI:15378"/>
        <dbReference type="ChEBI" id="CHEBI:57856"/>
        <dbReference type="ChEBI" id="CHEBI:59789"/>
        <dbReference type="ChEBI" id="CHEBI:156461"/>
        <dbReference type="ChEBI" id="CHEBI:167609"/>
        <dbReference type="EC" id="2.1.1.57"/>
    </reaction>
</comment>
<comment type="subunit">
    <molecule>Capsid protein C</molecule>
    <text evidence="5">Homodimer. Interacts (via N-terminus) with host EXOC1 (via C-terminus); this interaction results in EXOC1 degradation through the proteasome degradation pathway.</text>
</comment>
<comment type="subunit">
    <molecule>Protein prM</molecule>
    <text evidence="5">Forms heterodimers with envelope protein E in the endoplasmic reticulum and Golgi.</text>
</comment>
<comment type="subunit">
    <molecule>Envelope protein E</molecule>
    <text evidence="5">Homodimer; in the endoplasmic reticulum and Golgi. Interacts with protein prM. Interacts with non-structural protein 1.</text>
</comment>
<comment type="subunit">
    <molecule>Non-structural protein 1</molecule>
    <text evidence="5 6">Homodimer; Homohexamer when secreted. Interacts with envelope protein E (By similarity). Interacts with host PRKAA1 (By similarity).</text>
</comment>
<comment type="subunit">
    <molecule>Non-structural protein 2A</molecule>
    <text evidence="5">Interacts (via N-terminus) with serine protease NS3.</text>
</comment>
<comment type="subunit">
    <molecule>Serine protease subunit NS2B</molecule>
    <text evidence="5">Forms a heterodimer with serine protease NS3. May form homooligomers.</text>
</comment>
<comment type="subunit">
    <molecule>Serine protease NS3</molecule>
    <text evidence="5">Forms a heterodimer with NS2B. Interacts with NS4B. Interacts with unphosphorylated RNA-directed RNA polymerase NS5; this interaction stimulates RNA-directed RNA polymerase NS5 guanylyltransferase activity. Interacts with host SHFL.</text>
</comment>
<comment type="subunit">
    <molecule>Non-structural protein 4A</molecule>
    <text evidence="5 6 7">Interacts with host MAVS; this interaction inhibits the synthesis of IFN-beta. Interacts with host SHFL (By similarity). Interacts with host AUP1; the interaction occurs in the presence of Dengue virus NS4B and induces lipophagy which facilitates production of virus progeny particles (By similarity). May interact with host SRPRA and SEC61G (By similarity).</text>
</comment>
<comment type="subunit">
    <molecule>Non-structural protein 4B</molecule>
    <text evidence="5">Interacts with serine protease NS3.</text>
</comment>
<comment type="subunit">
    <molecule>RNA-directed RNA polymerase NS5</molecule>
    <text evidence="5 6">Homodimer (By similarity). Interacts with host STAT2; this interaction inhibits the phosphorylation of the latter, and, when all viral proteins are present (polyprotein), targets STAT2 for degradation (By similarity). Interacts with serine protease NS3 (By similarity). Interacts with host PAF1 complex; the interaction may prevent the recruitment of the PAF1 complex to interferon-responsive genes, and thus reduces the immune response (By similarity).</text>
</comment>
<comment type="subcellular location">
    <molecule>Capsid protein C</molecule>
    <subcellularLocation>
        <location evidence="5">Virion</location>
    </subcellularLocation>
    <subcellularLocation>
        <location evidence="5">Host nucleus</location>
    </subcellularLocation>
    <subcellularLocation>
        <location evidence="5">Host cytoplasm</location>
    </subcellularLocation>
    <subcellularLocation>
        <location evidence="5">Host cytoplasm</location>
        <location evidence="5">Host perinuclear region</location>
    </subcellularLocation>
</comment>
<comment type="subcellular location">
    <molecule>Peptide pr</molecule>
    <subcellularLocation>
        <location evidence="5">Secreted</location>
    </subcellularLocation>
</comment>
<comment type="subcellular location">
    <molecule>Small envelope protein M</molecule>
    <subcellularLocation>
        <location evidence="5">Virion membrane</location>
        <topology evidence="11">Multi-pass membrane protein</topology>
    </subcellularLocation>
    <subcellularLocation>
        <location evidence="5">Host endoplasmic reticulum membrane</location>
        <topology evidence="11">Multi-pass membrane protein</topology>
    </subcellularLocation>
</comment>
<comment type="subcellular location">
    <molecule>Envelope protein E</molecule>
    <subcellularLocation>
        <location evidence="5">Virion membrane</location>
        <topology evidence="11">Multi-pass membrane protein</topology>
    </subcellularLocation>
    <subcellularLocation>
        <location evidence="5">Host endoplasmic reticulum membrane</location>
        <topology evidence="11">Multi-pass membrane protein</topology>
    </subcellularLocation>
</comment>
<comment type="subcellular location">
    <molecule>Non-structural protein 1</molecule>
    <subcellularLocation>
        <location evidence="5">Secreted</location>
    </subcellularLocation>
    <subcellularLocation>
        <location evidence="6">Host cytoplasm</location>
    </subcellularLocation>
    <subcellularLocation>
        <location>Host endoplasmic reticulum membrane</location>
        <topology>Peripheral membrane protein</topology>
        <orientation evidence="5">Lumenal side</orientation>
    </subcellularLocation>
    <text evidence="10">Located in RE-derived vesicles hosting the replication complex.</text>
</comment>
<comment type="subcellular location">
    <molecule>Non-structural protein 2A</molecule>
    <subcellularLocation>
        <location evidence="5">Host endoplasmic reticulum membrane</location>
        <topology evidence="5">Multi-pass membrane protein</topology>
    </subcellularLocation>
</comment>
<comment type="subcellular location">
    <molecule>Serine protease subunit NS2B</molecule>
    <subcellularLocation>
        <location>Host endoplasmic reticulum membrane</location>
        <topology evidence="5">Multi-pass membrane protein</topology>
    </subcellularLocation>
</comment>
<comment type="subcellular location">
    <molecule>Serine protease NS3</molecule>
    <subcellularLocation>
        <location evidence="17">Host endoplasmic reticulum membrane</location>
        <topology evidence="17">Peripheral membrane protein</topology>
        <orientation evidence="17">Cytoplasmic side</orientation>
    </subcellularLocation>
    <text evidence="17">Remains non-covalently associated to serine protease subunit NS2B.</text>
</comment>
<comment type="subcellular location">
    <molecule>Non-structural protein 4A</molecule>
    <subcellularLocation>
        <location evidence="5">Host endoplasmic reticulum membrane</location>
        <topology evidence="5">Multi-pass membrane protein</topology>
    </subcellularLocation>
    <subcellularLocation>
        <location evidence="5">Host mitochondrion</location>
    </subcellularLocation>
    <text evidence="5">Located in RE-associated vesicles hosting the replication complex. Interacts with host MAVS in the mitochondrion-associated endoplasmic reticulum membranes.</text>
</comment>
<comment type="subcellular location">
    <molecule>Non-structural protein 4B</molecule>
    <subcellularLocation>
        <location evidence="5">Host endoplasmic reticulum membrane</location>
        <topology evidence="5">Multi-pass membrane protein</topology>
    </subcellularLocation>
    <text evidence="10">Located in RE-derived vesicles hosting the replication complex.</text>
</comment>
<comment type="subcellular location">
    <molecule>RNA-directed RNA polymerase NS5</molecule>
    <subcellularLocation>
        <location>Host endoplasmic reticulum membrane</location>
        <topology>Peripheral membrane protein</topology>
        <orientation>Cytoplasmic side</orientation>
    </subcellularLocation>
    <subcellularLocation>
        <location evidence="5">Host nucleus</location>
    </subcellularLocation>
    <text evidence="5">Located in RE-associated vesicles hosting the replication complex. NS5 protein is mainly localized in the nucleus rather than in ER vesicles, especially in the DENV 2, 3, 4 serotypes.</text>
</comment>
<comment type="domain">
    <text evidence="5">The transmembrane domains of the small envelope protein M and envelope protein E contain an endoplasmic reticulum retention signal.</text>
</comment>
<comment type="PTM">
    <molecule>Genome polyprotein</molecule>
    <text evidence="5">Specific enzymatic cleavages in vivo yield mature proteins. Cleavages in the lumen of endoplasmic reticulum are performed by host signal peptidase, whereas cleavages in the cytoplasmic side are performed by serine protease NS3. Signal cleavage at the 2K-4B site requires a prior NS3 protease-mediated cleavage at the 4A-2K site.</text>
</comment>
<comment type="PTM">
    <molecule>Protein prM</molecule>
    <text evidence="5">Cleaved in post-Golgi vesicles by a host furin, releasing the mature small envelope protein M, and peptide pr. This cleavage is incomplete as up to 30% of viral particles still carry uncleaved prM.</text>
</comment>
<comment type="PTM">
    <molecule>Envelope protein E</molecule>
    <text evidence="5">N-glycosylated.</text>
</comment>
<comment type="PTM">
    <molecule>Non-structural protein 1</molecule>
    <text evidence="5">N-glycosylated. The excreted form is glycosylated and this is required for efficient secretion of the protein from infected cells.</text>
</comment>
<comment type="PTM">
    <molecule>Serine protease NS3</molecule>
    <text evidence="8">Acetylated by host KAT5. Acetylation modulates NS3 RNA-binding and unwinding activities and plays an important positive role for viral replication.</text>
</comment>
<comment type="PTM">
    <molecule>RNA-directed RNA polymerase NS5</molecule>
    <text evidence="6">Sumoylation of RNA-directed RNA polymerase NS5 increases NS5 protein stability allowing proper viral RNA replication.</text>
</comment>
<comment type="PTM">
    <molecule>RNA-directed RNA polymerase NS5</molecule>
    <text evidence="5">Phosphorylated on serines residues. This phosphorylation may trigger NS5 nuclear localization.</text>
</comment>
<comment type="similarity">
    <text evidence="18">In the N-terminal section; belongs to the class I-like SAM-binding methyltransferase superfamily. mRNA cap 0-1 NS5-type methyltransferase family.</text>
</comment>
<comment type="online information" name="Virus Particle ExploreR db">
    <link uri="https://viperdb.org/Info_Page.php?VDB=1p58"/>
    <text>Icosahedral capsid structure</text>
</comment>
<organismHost>
    <name type="scientific">Aedimorphus</name>
    <dbReference type="NCBI Taxonomy" id="53540"/>
</organismHost>
<organismHost>
    <name type="scientific">Diceromyia</name>
    <dbReference type="NCBI Taxonomy" id="53539"/>
</organismHost>
<organismHost>
    <name type="scientific">Erythrocebus patas</name>
    <name type="common">Red guenon</name>
    <name type="synonym">Cercopithecus patas</name>
    <dbReference type="NCBI Taxonomy" id="9538"/>
</organismHost>
<organismHost>
    <name type="scientific">Homo sapiens</name>
    <name type="common">Human</name>
    <dbReference type="NCBI Taxonomy" id="9606"/>
</organismHost>
<organismHost>
    <name type="scientific">Stegomyia</name>
    <dbReference type="NCBI Taxonomy" id="53541"/>
</organismHost>
<proteinExistence type="evidence at protein level"/>
<dbReference type="EC" id="3.4.21.91"/>
<dbReference type="EC" id="3.6.1.15" evidence="10"/>
<dbReference type="EC" id="3.6.4.13" evidence="10"/>
<dbReference type="EC" id="2.1.1.56" evidence="18"/>
<dbReference type="EC" id="2.1.1.57" evidence="18"/>
<dbReference type="EC" id="2.7.7.48" evidence="13"/>
<dbReference type="EMBL" id="M19197">
    <property type="protein sequence ID" value="AAA42962.1"/>
    <property type="molecule type" value="Genomic_RNA"/>
</dbReference>
<dbReference type="PIR" id="A29972">
    <property type="entry name" value="GNWVDP"/>
</dbReference>
<dbReference type="PDB" id="1L9K">
    <property type="method" value="X-ray"/>
    <property type="resolution" value="2.40 A"/>
    <property type="chains" value="A=2492-2784"/>
</dbReference>
<dbReference type="PDB" id="1OAN">
    <property type="method" value="X-ray"/>
    <property type="resolution" value="2.75 A"/>
    <property type="chains" value="A/B=281-674"/>
</dbReference>
<dbReference type="PDB" id="1OK8">
    <property type="method" value="X-ray"/>
    <property type="resolution" value="2.00 A"/>
    <property type="chains" value="A=281-674"/>
</dbReference>
<dbReference type="PDB" id="1OKE">
    <property type="method" value="X-ray"/>
    <property type="resolution" value="2.40 A"/>
    <property type="chains" value="A/B=281-674"/>
</dbReference>
<dbReference type="PDB" id="1P58">
    <property type="method" value="EM"/>
    <property type="resolution" value="9.50 A"/>
    <property type="chains" value="A/B/C=281-775, D/E/F=206-280"/>
</dbReference>
<dbReference type="PDB" id="1R6A">
    <property type="method" value="X-ray"/>
    <property type="resolution" value="2.60 A"/>
    <property type="chains" value="A=2492-2784"/>
</dbReference>
<dbReference type="PDB" id="1R6R">
    <property type="method" value="NMR"/>
    <property type="chains" value="A/B=1-100"/>
</dbReference>
<dbReference type="PDB" id="1THD">
    <property type="method" value="EM"/>
    <property type="resolution" value="9.50 A"/>
    <property type="chains" value="A/B/C=281-675"/>
</dbReference>
<dbReference type="PDB" id="2P1D">
    <property type="method" value="X-ray"/>
    <property type="resolution" value="2.90 A"/>
    <property type="chains" value="A=2492-2784"/>
</dbReference>
<dbReference type="PDB" id="2P3L">
    <property type="method" value="X-ray"/>
    <property type="resolution" value="2.20 A"/>
    <property type="chains" value="A=2492-2784"/>
</dbReference>
<dbReference type="PDB" id="2P3O">
    <property type="method" value="X-ray"/>
    <property type="resolution" value="2.76 A"/>
    <property type="chains" value="A=2492-2784"/>
</dbReference>
<dbReference type="PDB" id="2P3Q">
    <property type="method" value="X-ray"/>
    <property type="resolution" value="2.75 A"/>
    <property type="chains" value="A=2492-2784"/>
</dbReference>
<dbReference type="PDB" id="2P40">
    <property type="method" value="X-ray"/>
    <property type="resolution" value="2.70 A"/>
    <property type="chains" value="A=2492-2784"/>
</dbReference>
<dbReference type="PDB" id="2P41">
    <property type="method" value="X-ray"/>
    <property type="resolution" value="1.80 A"/>
    <property type="chains" value="A=2492-2784"/>
</dbReference>
<dbReference type="PDB" id="3J8D">
    <property type="method" value="EM"/>
    <property type="resolution" value="26.00 A"/>
    <property type="chains" value="G/H/I=281-674"/>
</dbReference>
<dbReference type="PDB" id="3ZKO">
    <property type="method" value="EM"/>
    <property type="resolution" value="13.70 A"/>
    <property type="chains" value="A/B/C=281-775"/>
</dbReference>
<dbReference type="PDB" id="4M9F">
    <property type="method" value="X-ray"/>
    <property type="resolution" value="2.70 A"/>
    <property type="chains" value="A=1394-1440, A=1476-1660"/>
</dbReference>
<dbReference type="PDB" id="4M9I">
    <property type="method" value="X-ray"/>
    <property type="resolution" value="2.40 A"/>
    <property type="chains" value="A=1394-1440, A=1476-1660"/>
</dbReference>
<dbReference type="PDB" id="4M9K">
    <property type="method" value="X-ray"/>
    <property type="resolution" value="1.46 A"/>
    <property type="chains" value="A=1394-1440, A=1476-1660"/>
</dbReference>
<dbReference type="PDB" id="4M9M">
    <property type="method" value="X-ray"/>
    <property type="resolution" value="1.53 A"/>
    <property type="chains" value="A=1394-1440, A=1476-1660"/>
</dbReference>
<dbReference type="PDB" id="4M9T">
    <property type="method" value="X-ray"/>
    <property type="resolution" value="1.74 A"/>
    <property type="chains" value="A=1394-1440, A=1476-1660"/>
</dbReference>
<dbReference type="PDB" id="5HHG">
    <property type="method" value="X-ray"/>
    <property type="resolution" value="2.20 A"/>
    <property type="chains" value="C=3353-3388"/>
</dbReference>
<dbReference type="PDBsum" id="1L9K"/>
<dbReference type="PDBsum" id="1OAN"/>
<dbReference type="PDBsum" id="1OK8"/>
<dbReference type="PDBsum" id="1OKE"/>
<dbReference type="PDBsum" id="1P58"/>
<dbReference type="PDBsum" id="1R6A"/>
<dbReference type="PDBsum" id="1R6R"/>
<dbReference type="PDBsum" id="1THD"/>
<dbReference type="PDBsum" id="2P1D"/>
<dbReference type="PDBsum" id="2P3L"/>
<dbReference type="PDBsum" id="2P3O"/>
<dbReference type="PDBsum" id="2P3Q"/>
<dbReference type="PDBsum" id="2P40"/>
<dbReference type="PDBsum" id="2P41"/>
<dbReference type="PDBsum" id="3J8D"/>
<dbReference type="PDBsum" id="3ZKO"/>
<dbReference type="PDBsum" id="4M9F"/>
<dbReference type="PDBsum" id="4M9I"/>
<dbReference type="PDBsum" id="4M9K"/>
<dbReference type="PDBsum" id="4M9M"/>
<dbReference type="PDBsum" id="4M9T"/>
<dbReference type="PDBsum" id="5HHG"/>
<dbReference type="BMRB" id="P12823"/>
<dbReference type="SMR" id="P12823"/>
<dbReference type="BindingDB" id="P12823"/>
<dbReference type="ChEMBL" id="CHEMBL3308998"/>
<dbReference type="DrugBank" id="DB00811">
    <property type="generic name" value="Ribavirin"/>
</dbReference>
<dbReference type="DrugBank" id="DB01752">
    <property type="generic name" value="S-adenosyl-L-homocysteine"/>
</dbReference>
<dbReference type="MEROPS" id="S07.001"/>
<dbReference type="ABCD" id="P12823">
    <property type="antibodies" value="9 sequenced antibodies"/>
</dbReference>
<dbReference type="BRENDA" id="2.1.1.57">
    <property type="organism ID" value="1867"/>
</dbReference>
<dbReference type="EvolutionaryTrace" id="P12823"/>
<dbReference type="PRO" id="PR:P12823"/>
<dbReference type="Proteomes" id="UP000007197">
    <property type="component" value="Genome"/>
</dbReference>
<dbReference type="GO" id="GO:0005576">
    <property type="term" value="C:extracellular region"/>
    <property type="evidence" value="ECO:0007669"/>
    <property type="project" value="UniProtKB-SubCell"/>
</dbReference>
<dbReference type="GO" id="GO:0044167">
    <property type="term" value="C:host cell endoplasmic reticulum membrane"/>
    <property type="evidence" value="ECO:0007669"/>
    <property type="project" value="UniProtKB-SubCell"/>
</dbReference>
<dbReference type="GO" id="GO:0033650">
    <property type="term" value="C:host cell mitochondrion"/>
    <property type="evidence" value="ECO:0007669"/>
    <property type="project" value="UniProtKB-SubCell"/>
</dbReference>
<dbReference type="GO" id="GO:0042025">
    <property type="term" value="C:host cell nucleus"/>
    <property type="evidence" value="ECO:0007669"/>
    <property type="project" value="UniProtKB-SubCell"/>
</dbReference>
<dbReference type="GO" id="GO:0044220">
    <property type="term" value="C:host cell perinuclear region of cytoplasm"/>
    <property type="evidence" value="ECO:0007669"/>
    <property type="project" value="UniProtKB-SubCell"/>
</dbReference>
<dbReference type="GO" id="GO:0016020">
    <property type="term" value="C:membrane"/>
    <property type="evidence" value="ECO:0007669"/>
    <property type="project" value="UniProtKB-KW"/>
</dbReference>
<dbReference type="GO" id="GO:0019028">
    <property type="term" value="C:viral capsid"/>
    <property type="evidence" value="ECO:0007669"/>
    <property type="project" value="UniProtKB-KW"/>
</dbReference>
<dbReference type="GO" id="GO:0019031">
    <property type="term" value="C:viral envelope"/>
    <property type="evidence" value="ECO:0007669"/>
    <property type="project" value="UniProtKB-KW"/>
</dbReference>
<dbReference type="GO" id="GO:0055036">
    <property type="term" value="C:virion membrane"/>
    <property type="evidence" value="ECO:0007669"/>
    <property type="project" value="UniProtKB-SubCell"/>
</dbReference>
<dbReference type="GO" id="GO:0005524">
    <property type="term" value="F:ATP binding"/>
    <property type="evidence" value="ECO:0007669"/>
    <property type="project" value="UniProtKB-KW"/>
</dbReference>
<dbReference type="GO" id="GO:0016887">
    <property type="term" value="F:ATP hydrolysis activity"/>
    <property type="evidence" value="ECO:0007669"/>
    <property type="project" value="RHEA"/>
</dbReference>
<dbReference type="GO" id="GO:0015267">
    <property type="term" value="F:channel activity"/>
    <property type="evidence" value="ECO:0007669"/>
    <property type="project" value="UniProtKB-KW"/>
</dbReference>
<dbReference type="GO" id="GO:0003725">
    <property type="term" value="F:double-stranded RNA binding"/>
    <property type="evidence" value="ECO:0007669"/>
    <property type="project" value="InterPro"/>
</dbReference>
<dbReference type="GO" id="GO:0046872">
    <property type="term" value="F:metal ion binding"/>
    <property type="evidence" value="ECO:0007669"/>
    <property type="project" value="UniProtKB-KW"/>
</dbReference>
<dbReference type="GO" id="GO:0004483">
    <property type="term" value="F:mRNA (nucleoside-2'-O-)-methyltransferase activity"/>
    <property type="evidence" value="ECO:0007669"/>
    <property type="project" value="UniProtKB-EC"/>
</dbReference>
<dbReference type="GO" id="GO:0004482">
    <property type="term" value="F:mRNA 5'-cap (guanine-N7-)-methyltransferase activity"/>
    <property type="evidence" value="ECO:0007669"/>
    <property type="project" value="UniProtKB-EC"/>
</dbReference>
<dbReference type="GO" id="GO:0046983">
    <property type="term" value="F:protein dimerization activity"/>
    <property type="evidence" value="ECO:0007669"/>
    <property type="project" value="InterPro"/>
</dbReference>
<dbReference type="GO" id="GO:0003724">
    <property type="term" value="F:RNA helicase activity"/>
    <property type="evidence" value="ECO:0007669"/>
    <property type="project" value="UniProtKB-EC"/>
</dbReference>
<dbReference type="GO" id="GO:0003968">
    <property type="term" value="F:RNA-directed RNA polymerase activity"/>
    <property type="evidence" value="ECO:0007669"/>
    <property type="project" value="UniProtKB-KW"/>
</dbReference>
<dbReference type="GO" id="GO:0004252">
    <property type="term" value="F:serine-type endopeptidase activity"/>
    <property type="evidence" value="ECO:0007669"/>
    <property type="project" value="InterPro"/>
</dbReference>
<dbReference type="GO" id="GO:0005198">
    <property type="term" value="F:structural molecule activity"/>
    <property type="evidence" value="ECO:0007669"/>
    <property type="project" value="InterPro"/>
</dbReference>
<dbReference type="GO" id="GO:0075512">
    <property type="term" value="P:clathrin-dependent endocytosis of virus by host cell"/>
    <property type="evidence" value="ECO:0007669"/>
    <property type="project" value="UniProtKB-KW"/>
</dbReference>
<dbReference type="GO" id="GO:0039654">
    <property type="term" value="P:fusion of virus membrane with host endosome membrane"/>
    <property type="evidence" value="ECO:0007669"/>
    <property type="project" value="UniProtKB-KW"/>
</dbReference>
<dbReference type="GO" id="GO:0034220">
    <property type="term" value="P:monoatomic ion transmembrane transport"/>
    <property type="evidence" value="ECO:0007669"/>
    <property type="project" value="UniProtKB-KW"/>
</dbReference>
<dbReference type="GO" id="GO:0006508">
    <property type="term" value="P:proteolysis"/>
    <property type="evidence" value="ECO:0007669"/>
    <property type="project" value="UniProtKB-KW"/>
</dbReference>
<dbReference type="GO" id="GO:0039520">
    <property type="term" value="P:symbiont-mediated activation of host autophagy"/>
    <property type="evidence" value="ECO:0007669"/>
    <property type="project" value="UniProtKB-KW"/>
</dbReference>
<dbReference type="GO" id="GO:0039545">
    <property type="term" value="P:symbiont-mediated suppression of host cytoplasmic pattern recognition receptor signaling pathway via inhibition of MAVS activity"/>
    <property type="evidence" value="ECO:0007669"/>
    <property type="project" value="UniProtKB-KW"/>
</dbReference>
<dbReference type="GO" id="GO:0039574">
    <property type="term" value="P:symbiont-mediated suppression of host JAK-STAT cascade via inhibition of host TYK2 activity"/>
    <property type="evidence" value="ECO:0007669"/>
    <property type="project" value="UniProtKB-KW"/>
</dbReference>
<dbReference type="GO" id="GO:0039564">
    <property type="term" value="P:symbiont-mediated suppression of host JAK-STAT cascade via inhibition of STAT2 activity"/>
    <property type="evidence" value="ECO:0007669"/>
    <property type="project" value="UniProtKB-KW"/>
</dbReference>
<dbReference type="GO" id="GO:0039502">
    <property type="term" value="P:symbiont-mediated suppression of host type I interferon-mediated signaling pathway"/>
    <property type="evidence" value="ECO:0007669"/>
    <property type="project" value="UniProtKB-KW"/>
</dbReference>
<dbReference type="GO" id="GO:0039694">
    <property type="term" value="P:viral RNA genome replication"/>
    <property type="evidence" value="ECO:0007669"/>
    <property type="project" value="InterPro"/>
</dbReference>
<dbReference type="GO" id="GO:0019062">
    <property type="term" value="P:virion attachment to host cell"/>
    <property type="evidence" value="ECO:0007669"/>
    <property type="project" value="UniProtKB-KW"/>
</dbReference>
<dbReference type="CDD" id="cd20761">
    <property type="entry name" value="capping_2-OMTase_Flaviviridae"/>
    <property type="match status" value="1"/>
</dbReference>
<dbReference type="CDD" id="cd17931">
    <property type="entry name" value="DEXHc_viral_Ns3"/>
    <property type="match status" value="1"/>
</dbReference>
<dbReference type="CDD" id="cd12149">
    <property type="entry name" value="Flavi_E_C"/>
    <property type="match status" value="1"/>
</dbReference>
<dbReference type="CDD" id="cd17038">
    <property type="entry name" value="Flavi_M"/>
    <property type="match status" value="1"/>
</dbReference>
<dbReference type="CDD" id="cd23204">
    <property type="entry name" value="Flavivirus_RdRp"/>
    <property type="match status" value="1"/>
</dbReference>
<dbReference type="CDD" id="cd18806">
    <property type="entry name" value="SF2_C_viral"/>
    <property type="match status" value="1"/>
</dbReference>
<dbReference type="DisProt" id="DP01245"/>
<dbReference type="FunFam" id="1.20.1280.260:FF:000001">
    <property type="entry name" value="Envelope glycoprotein"/>
    <property type="match status" value="1"/>
</dbReference>
<dbReference type="FunFam" id="2.60.40.350:FF:000001">
    <property type="entry name" value="Envelope glycoprotein"/>
    <property type="match status" value="1"/>
</dbReference>
<dbReference type="FunFam" id="1.10.10.930:FF:000001">
    <property type="entry name" value="Genome polyprotein"/>
    <property type="match status" value="1"/>
</dbReference>
<dbReference type="FunFam" id="1.10.260.90:FF:000001">
    <property type="entry name" value="Genome polyprotein"/>
    <property type="match status" value="1"/>
</dbReference>
<dbReference type="FunFam" id="2.60.260.50:FF:000001">
    <property type="entry name" value="Genome polyprotein"/>
    <property type="match status" value="1"/>
</dbReference>
<dbReference type="FunFam" id="3.30.70.2840:FF:000001">
    <property type="entry name" value="Genome polyprotein"/>
    <property type="match status" value="1"/>
</dbReference>
<dbReference type="FunFam" id="3.30.70.2840:FF:000002">
    <property type="entry name" value="Genome polyprotein"/>
    <property type="match status" value="1"/>
</dbReference>
<dbReference type="FunFam" id="3.40.50.150:FF:000105">
    <property type="entry name" value="Genome polyprotein"/>
    <property type="match status" value="1"/>
</dbReference>
<dbReference type="FunFam" id="3.40.50.300:FF:000763">
    <property type="entry name" value="Genome polyprotein"/>
    <property type="match status" value="1"/>
</dbReference>
<dbReference type="Gene3D" id="1.10.10.930">
    <property type="match status" value="1"/>
</dbReference>
<dbReference type="Gene3D" id="1.10.260.90">
    <property type="match status" value="1"/>
</dbReference>
<dbReference type="Gene3D" id="1.20.1280.260">
    <property type="match status" value="1"/>
</dbReference>
<dbReference type="Gene3D" id="2.40.10.120">
    <property type="match status" value="2"/>
</dbReference>
<dbReference type="Gene3D" id="2.60.40.350">
    <property type="match status" value="1"/>
</dbReference>
<dbReference type="Gene3D" id="1.10.8.970">
    <property type="entry name" value="Flavivirus envelope glycoprotein M-like"/>
    <property type="match status" value="1"/>
</dbReference>
<dbReference type="Gene3D" id="2.60.260.50">
    <property type="entry name" value="Flavivirus polyprotein propeptide domain"/>
    <property type="match status" value="1"/>
</dbReference>
<dbReference type="Gene3D" id="3.30.70.2840">
    <property type="entry name" value="Flavivirus RNA-directed RNA polymerase, thumb domain"/>
    <property type="match status" value="3"/>
</dbReference>
<dbReference type="Gene3D" id="3.40.50.300">
    <property type="entry name" value="P-loop containing nucleotide triphosphate hydrolases"/>
    <property type="match status" value="2"/>
</dbReference>
<dbReference type="Gene3D" id="2.60.98.10">
    <property type="entry name" value="Tick-borne Encephalitis virus Glycoprotein, domain 1"/>
    <property type="match status" value="1"/>
</dbReference>
<dbReference type="Gene3D" id="2.40.10.10">
    <property type="entry name" value="Trypsin-like serine proteases"/>
    <property type="match status" value="1"/>
</dbReference>
<dbReference type="Gene3D" id="3.40.50.150">
    <property type="entry name" value="Vaccinia Virus protein VP39"/>
    <property type="match status" value="1"/>
</dbReference>
<dbReference type="Gene3D" id="3.30.67.10">
    <property type="entry name" value="Viral Envelope Glycoprotein, domain 2"/>
    <property type="match status" value="1"/>
</dbReference>
<dbReference type="Gene3D" id="3.30.387.10">
    <property type="entry name" value="Viral Envelope Glycoprotein, domain 3"/>
    <property type="match status" value="1"/>
</dbReference>
<dbReference type="InterPro" id="IPR043502">
    <property type="entry name" value="DNA/RNA_pol_sf"/>
</dbReference>
<dbReference type="InterPro" id="IPR000069">
    <property type="entry name" value="Env_glycoprot_M_flavivir"/>
</dbReference>
<dbReference type="InterPro" id="IPR038302">
    <property type="entry name" value="Env_glycoprot_M_sf_flavivir"/>
</dbReference>
<dbReference type="InterPro" id="IPR013755">
    <property type="entry name" value="Flav_gly_cen_dom_subdom1"/>
</dbReference>
<dbReference type="InterPro" id="IPR001122">
    <property type="entry name" value="Flavi_capsidC"/>
</dbReference>
<dbReference type="InterPro" id="IPR037172">
    <property type="entry name" value="Flavi_capsidC_sf"/>
</dbReference>
<dbReference type="InterPro" id="IPR011492">
    <property type="entry name" value="Flavi_DEAD"/>
</dbReference>
<dbReference type="InterPro" id="IPR027287">
    <property type="entry name" value="Flavi_E_Ig-like"/>
</dbReference>
<dbReference type="InterPro" id="IPR026470">
    <property type="entry name" value="Flavi_E_Stem/Anchor_dom"/>
</dbReference>
<dbReference type="InterPro" id="IPR038345">
    <property type="entry name" value="Flavi_E_Stem/Anchor_dom_sf"/>
</dbReference>
<dbReference type="InterPro" id="IPR011998">
    <property type="entry name" value="Flavi_Glycoprot_E_cen/dimer"/>
</dbReference>
<dbReference type="InterPro" id="IPR001157">
    <property type="entry name" value="Flavi_NS1"/>
</dbReference>
<dbReference type="InterPro" id="IPR000752">
    <property type="entry name" value="Flavi_NS2A"/>
</dbReference>
<dbReference type="InterPro" id="IPR000487">
    <property type="entry name" value="Flavi_NS2B"/>
</dbReference>
<dbReference type="InterPro" id="IPR001850">
    <property type="entry name" value="Flavi_NS3_S7"/>
</dbReference>
<dbReference type="InterPro" id="IPR000404">
    <property type="entry name" value="Flavi_NS4A"/>
</dbReference>
<dbReference type="InterPro" id="IPR001528">
    <property type="entry name" value="Flavi_NS4B"/>
</dbReference>
<dbReference type="InterPro" id="IPR046811">
    <property type="entry name" value="Flavi_NS5_thumb"/>
</dbReference>
<dbReference type="InterPro" id="IPR002535">
    <property type="entry name" value="Flavi_propep"/>
</dbReference>
<dbReference type="InterPro" id="IPR038688">
    <property type="entry name" value="Flavi_propep_sf"/>
</dbReference>
<dbReference type="InterPro" id="IPR047530">
    <property type="entry name" value="Flavi_RdRp"/>
</dbReference>
<dbReference type="InterPro" id="IPR000208">
    <property type="entry name" value="Flavi_RdRp_fingers/palm"/>
</dbReference>
<dbReference type="InterPro" id="IPR000336">
    <property type="entry name" value="Flavivir/Alphavir_Ig-like_sf"/>
</dbReference>
<dbReference type="InterPro" id="IPR014412">
    <property type="entry name" value="Gen_Poly_FLV"/>
</dbReference>
<dbReference type="InterPro" id="IPR036253">
    <property type="entry name" value="Glycoprot_cen/dimer_sf"/>
</dbReference>
<dbReference type="InterPro" id="IPR038055">
    <property type="entry name" value="Glycoprot_E_dimer_dom"/>
</dbReference>
<dbReference type="InterPro" id="IPR013756">
    <property type="entry name" value="GlyE_cen_dom_subdom2"/>
</dbReference>
<dbReference type="InterPro" id="IPR014001">
    <property type="entry name" value="Helicase_ATP-bd"/>
</dbReference>
<dbReference type="InterPro" id="IPR001650">
    <property type="entry name" value="Helicase_C-like"/>
</dbReference>
<dbReference type="InterPro" id="IPR014756">
    <property type="entry name" value="Ig_E-set"/>
</dbReference>
<dbReference type="InterPro" id="IPR026490">
    <property type="entry name" value="mRNA_cap_0/1_MeTrfase"/>
</dbReference>
<dbReference type="InterPro" id="IPR049486">
    <property type="entry name" value="NS3-hel_C_flaviviridae"/>
</dbReference>
<dbReference type="InterPro" id="IPR027417">
    <property type="entry name" value="P-loop_NTPase"/>
</dbReference>
<dbReference type="InterPro" id="IPR009003">
    <property type="entry name" value="Peptidase_S1_PA"/>
</dbReference>
<dbReference type="InterPro" id="IPR043504">
    <property type="entry name" value="Peptidase_S1_PA_chymotrypsin"/>
</dbReference>
<dbReference type="InterPro" id="IPR007094">
    <property type="entry name" value="RNA-dir_pol_PSvirus"/>
</dbReference>
<dbReference type="InterPro" id="IPR002877">
    <property type="entry name" value="RNA_MeTrfase_FtsJ_dom"/>
</dbReference>
<dbReference type="InterPro" id="IPR029063">
    <property type="entry name" value="SAM-dependent_MTases_sf"/>
</dbReference>
<dbReference type="NCBIfam" id="TIGR04240">
    <property type="entry name" value="flavi_E_stem"/>
    <property type="match status" value="1"/>
</dbReference>
<dbReference type="Pfam" id="PF20907">
    <property type="entry name" value="Flav_NS3-hel_C"/>
    <property type="match status" value="1"/>
</dbReference>
<dbReference type="Pfam" id="PF01003">
    <property type="entry name" value="Flavi_capsid"/>
    <property type="match status" value="1"/>
</dbReference>
<dbReference type="Pfam" id="PF07652">
    <property type="entry name" value="Flavi_DEAD"/>
    <property type="match status" value="1"/>
</dbReference>
<dbReference type="Pfam" id="PF21659">
    <property type="entry name" value="Flavi_E_stem"/>
    <property type="match status" value="1"/>
</dbReference>
<dbReference type="Pfam" id="PF02832">
    <property type="entry name" value="Flavi_glycop_C"/>
    <property type="match status" value="1"/>
</dbReference>
<dbReference type="Pfam" id="PF00869">
    <property type="entry name" value="Flavi_glycoprot"/>
    <property type="match status" value="1"/>
</dbReference>
<dbReference type="Pfam" id="PF01004">
    <property type="entry name" value="Flavi_M"/>
    <property type="match status" value="1"/>
</dbReference>
<dbReference type="Pfam" id="PF00948">
    <property type="entry name" value="Flavi_NS1"/>
    <property type="match status" value="1"/>
</dbReference>
<dbReference type="Pfam" id="PF01005">
    <property type="entry name" value="Flavi_NS2A"/>
    <property type="match status" value="1"/>
</dbReference>
<dbReference type="Pfam" id="PF01002">
    <property type="entry name" value="Flavi_NS2B"/>
    <property type="match status" value="1"/>
</dbReference>
<dbReference type="Pfam" id="PF01350">
    <property type="entry name" value="Flavi_NS4A"/>
    <property type="match status" value="1"/>
</dbReference>
<dbReference type="Pfam" id="PF01349">
    <property type="entry name" value="Flavi_NS4B"/>
    <property type="match status" value="1"/>
</dbReference>
<dbReference type="Pfam" id="PF00972">
    <property type="entry name" value="Flavi_NS5"/>
    <property type="match status" value="1"/>
</dbReference>
<dbReference type="Pfam" id="PF20483">
    <property type="entry name" value="Flavi_NS5_thumb"/>
    <property type="match status" value="1"/>
</dbReference>
<dbReference type="Pfam" id="PF01570">
    <property type="entry name" value="Flavi_propep"/>
    <property type="match status" value="1"/>
</dbReference>
<dbReference type="Pfam" id="PF01728">
    <property type="entry name" value="FtsJ"/>
    <property type="match status" value="1"/>
</dbReference>
<dbReference type="Pfam" id="PF00949">
    <property type="entry name" value="Peptidase_S7"/>
    <property type="match status" value="1"/>
</dbReference>
<dbReference type="PIRSF" id="PIRSF003817">
    <property type="entry name" value="Gen_Poly_FLV"/>
    <property type="match status" value="1"/>
</dbReference>
<dbReference type="SMART" id="SM00487">
    <property type="entry name" value="DEXDc"/>
    <property type="match status" value="1"/>
</dbReference>
<dbReference type="SMART" id="SM00490">
    <property type="entry name" value="HELICc"/>
    <property type="match status" value="1"/>
</dbReference>
<dbReference type="SUPFAM" id="SSF56672">
    <property type="entry name" value="DNA/RNA polymerases"/>
    <property type="match status" value="1"/>
</dbReference>
<dbReference type="SUPFAM" id="SSF81296">
    <property type="entry name" value="E set domains"/>
    <property type="match status" value="1"/>
</dbReference>
<dbReference type="SUPFAM" id="SSF101257">
    <property type="entry name" value="Flavivirus capsid protein C"/>
    <property type="match status" value="1"/>
</dbReference>
<dbReference type="SUPFAM" id="SSF52540">
    <property type="entry name" value="P-loop containing nucleoside triphosphate hydrolases"/>
    <property type="match status" value="2"/>
</dbReference>
<dbReference type="SUPFAM" id="SSF53335">
    <property type="entry name" value="S-adenosyl-L-methionine-dependent methyltransferases"/>
    <property type="match status" value="1"/>
</dbReference>
<dbReference type="SUPFAM" id="SSF50494">
    <property type="entry name" value="Trypsin-like serine proteases"/>
    <property type="match status" value="1"/>
</dbReference>
<dbReference type="SUPFAM" id="SSF56983">
    <property type="entry name" value="Viral glycoprotein, central and dimerisation domains"/>
    <property type="match status" value="1"/>
</dbReference>
<dbReference type="PROSITE" id="PS51527">
    <property type="entry name" value="FLAVIVIRUS_NS2B"/>
    <property type="match status" value="1"/>
</dbReference>
<dbReference type="PROSITE" id="PS51528">
    <property type="entry name" value="FLAVIVIRUS_NS3PRO"/>
    <property type="match status" value="1"/>
</dbReference>
<dbReference type="PROSITE" id="PS51192">
    <property type="entry name" value="HELICASE_ATP_BIND_1"/>
    <property type="match status" value="1"/>
</dbReference>
<dbReference type="PROSITE" id="PS51194">
    <property type="entry name" value="HELICASE_CTER"/>
    <property type="match status" value="1"/>
</dbReference>
<dbReference type="PROSITE" id="PS50507">
    <property type="entry name" value="RDRP_SSRNA_POS"/>
    <property type="match status" value="1"/>
</dbReference>
<dbReference type="PROSITE" id="PS51591">
    <property type="entry name" value="RNA_CAP01_NS5_MT"/>
    <property type="match status" value="1"/>
</dbReference>
<protein>
    <recommendedName>
        <fullName>Genome polyprotein</fullName>
    </recommendedName>
    <component>
        <recommendedName>
            <fullName>Capsid protein C</fullName>
        </recommendedName>
        <alternativeName>
            <fullName>Core protein</fullName>
        </alternativeName>
    </component>
    <component>
        <recommendedName>
            <fullName>Protein prM</fullName>
        </recommendedName>
    </component>
    <component>
        <recommendedName>
            <fullName>Peptide pr</fullName>
        </recommendedName>
    </component>
    <component>
        <recommendedName>
            <fullName>Small envelope protein M</fullName>
        </recommendedName>
        <alternativeName>
            <fullName>Matrix protein</fullName>
        </alternativeName>
    </component>
    <component>
        <recommendedName>
            <fullName>Envelope protein E</fullName>
        </recommendedName>
    </component>
    <component>
        <recommendedName>
            <fullName>Non-structural protein 1</fullName>
            <shortName>NS1</shortName>
        </recommendedName>
    </component>
    <component>
        <recommendedName>
            <fullName>Non-structural protein 2A</fullName>
            <shortName>NS2A</shortName>
        </recommendedName>
    </component>
    <component>
        <recommendedName>
            <fullName>Serine protease subunit NS2B</fullName>
        </recommendedName>
        <alternativeName>
            <fullName>Flavivirin protease NS2B regulatory subunit</fullName>
        </alternativeName>
        <alternativeName>
            <fullName>Non-structural protein 2B</fullName>
        </alternativeName>
    </component>
    <component>
        <recommendedName>
            <fullName>Serine protease NS3</fullName>
            <ecNumber>3.4.21.91</ecNumber>
            <ecNumber evidence="10">3.6.1.15</ecNumber>
            <ecNumber evidence="10">3.6.4.13</ecNumber>
        </recommendedName>
        <alternativeName>
            <fullName>Flavivirin protease NS3 catalytic subunit</fullName>
        </alternativeName>
        <alternativeName>
            <fullName>Non-structural protein 3</fullName>
        </alternativeName>
    </component>
    <component>
        <recommendedName>
            <fullName>Non-structural protein 4A</fullName>
            <shortName>NS4A</shortName>
        </recommendedName>
    </component>
    <component>
        <recommendedName>
            <fullName>Peptide 2k</fullName>
        </recommendedName>
    </component>
    <component>
        <recommendedName>
            <fullName>Non-structural protein 4B</fullName>
            <shortName>NS4B</shortName>
        </recommendedName>
    </component>
    <component>
        <recommendedName>
            <fullName>RNA-directed RNA polymerase NS5</fullName>
            <ecNumber evidence="18">2.1.1.56</ecNumber>
            <ecNumber evidence="18">2.1.1.57</ecNumber>
            <ecNumber evidence="13">2.7.7.48</ecNumber>
        </recommendedName>
        <alternativeName>
            <fullName>Non-structural protein 5</fullName>
        </alternativeName>
    </component>
</protein>
<evidence type="ECO:0000250" key="1">
    <source>
        <dbReference type="UniProtKB" id="P03314"/>
    </source>
</evidence>
<evidence type="ECO:0000250" key="2">
    <source>
        <dbReference type="UniProtKB" id="P14335"/>
    </source>
</evidence>
<evidence type="ECO:0000250" key="3">
    <source>
        <dbReference type="UniProtKB" id="P14336"/>
    </source>
</evidence>
<evidence type="ECO:0000250" key="4">
    <source>
        <dbReference type="UniProtKB" id="P14340"/>
    </source>
</evidence>
<evidence type="ECO:0000250" key="5">
    <source>
        <dbReference type="UniProtKB" id="P17763"/>
    </source>
</evidence>
<evidence type="ECO:0000250" key="6">
    <source>
        <dbReference type="UniProtKB" id="P29990"/>
    </source>
</evidence>
<evidence type="ECO:0000250" key="7">
    <source>
        <dbReference type="UniProtKB" id="P29991"/>
    </source>
</evidence>
<evidence type="ECO:0000250" key="8">
    <source>
        <dbReference type="UniProtKB" id="Q32ZE1"/>
    </source>
</evidence>
<evidence type="ECO:0000250" key="9">
    <source>
        <dbReference type="UniProtKB" id="Q6YMS4"/>
    </source>
</evidence>
<evidence type="ECO:0000250" key="10">
    <source>
        <dbReference type="UniProtKB" id="Q9Q6P4"/>
    </source>
</evidence>
<evidence type="ECO:0000255" key="11"/>
<evidence type="ECO:0000255" key="12">
    <source>
        <dbReference type="PROSITE-ProRule" id="PRU00498"/>
    </source>
</evidence>
<evidence type="ECO:0000255" key="13">
    <source>
        <dbReference type="PROSITE-ProRule" id="PRU00539"/>
    </source>
</evidence>
<evidence type="ECO:0000255" key="14">
    <source>
        <dbReference type="PROSITE-ProRule" id="PRU00541"/>
    </source>
</evidence>
<evidence type="ECO:0000255" key="15">
    <source>
        <dbReference type="PROSITE-ProRule" id="PRU00542"/>
    </source>
</evidence>
<evidence type="ECO:0000255" key="16">
    <source>
        <dbReference type="PROSITE-ProRule" id="PRU00859"/>
    </source>
</evidence>
<evidence type="ECO:0000255" key="17">
    <source>
        <dbReference type="PROSITE-ProRule" id="PRU00860"/>
    </source>
</evidence>
<evidence type="ECO:0000255" key="18">
    <source>
        <dbReference type="PROSITE-ProRule" id="PRU00924"/>
    </source>
</evidence>
<evidence type="ECO:0000269" key="19">
    <source>
    </source>
</evidence>
<evidence type="ECO:0000269" key="20">
    <source>
    </source>
</evidence>
<evidence type="ECO:0000305" key="21"/>
<evidence type="ECO:0007829" key="22">
    <source>
        <dbReference type="PDB" id="1L9K"/>
    </source>
</evidence>
<evidence type="ECO:0007829" key="23">
    <source>
        <dbReference type="PDB" id="1OK8"/>
    </source>
</evidence>
<evidence type="ECO:0007829" key="24">
    <source>
        <dbReference type="PDB" id="1OKE"/>
    </source>
</evidence>
<evidence type="ECO:0007829" key="25">
    <source>
        <dbReference type="PDB" id="1R6R"/>
    </source>
</evidence>
<evidence type="ECO:0007829" key="26">
    <source>
        <dbReference type="PDB" id="2P1D"/>
    </source>
</evidence>
<evidence type="ECO:0007829" key="27">
    <source>
        <dbReference type="PDB" id="4M9K"/>
    </source>
</evidence>
<evidence type="ECO:0007829" key="28">
    <source>
        <dbReference type="PDB" id="4M9T"/>
    </source>
</evidence>
<name>POLG_DEN2P</name>
<sequence length="3388" mass="379219">MNDQRKKARNTPFNMLKRERNRVSTVQQLTKRFSLGMLQGRGPLKLFMALVAFLRFLTIPPTAGILKRWGTIKKSKAINVLRGFRKEIGRMLNILNRRRRTAGMIIMLIPTVMAFHLTTRNGEPHMIVSRQEKGKSLLFKTKDGTNMCTLMAMDLGELCEDTITYKCPFLKQNEPEDIDCWCNSTSTWVTYGTCTTTGEHRREKRSVALVPHVGMGLETRTETWMSSEGAWKHAQRIETWILRHPGFTIMAAILAYTIGTTHFQRVLIFILLTAIAPSMTMRCIGISNRDFVEGVSGGSWVDIVLEHGSCVTTMAKNKPTLDFELIKTEAKQPATLRKYCIEAKLTNTTTDSRCPTQGEPTLNEEQDKRFVCKHSMVDRGWGNGCGLFGKGGIVTCAMFTCKKNMEGKIVQPENLEYTVVITPHSGEEHAVGNDTGKHGKEVKITPQSSITEAELTGYGTVTMECSPRTGLDFNEMVLLQMKDKAWLVHRQWFLDLPLPWLPGADTQGSNWIQKETLVTFKNPHAKKQDVVVLGSQEGAMHTALTGATEIQMSSGNLLFTGHLKCRLRMDKLQLKGMSYSMCTGKFKVVKEIAETQHGTIVIRVQYEGDGSPCKTPFEIMDLEKRHVLGRLTTVNPIVTEKDSPVNIEAEPPFGDSYIIIGVEPGQLKLDWFKKGSSIGQMFETTMRGAKRMAILGDTAWDFGSLGGVFTSIGKALHQVFGAIYGAAFSGVSWTMKILIGVIITWIGMNSRSTSLSVSLVLVGIVTLYLGVMVQADSGCVVSWKNKELKCGSGIFVTDNVHTWTEQYKFQPESPSKLASAIQKAHEEGICGIRSVTRLENLMWKQITSELNHILSENEVKLTIMTGDIKGIMQVGKRSLRPQPTELRYSWKTWGKAKMLSTELHNQTFLIDGPETAECPNTNRAWNSLEVEDYGFGVFTTNIWLRLREKQDAFCDSKLMSAAIKDNRAVHADMGYWIESALNDTWKIEKASFIEVKSCHWPKSHTLWSNGVLESEMVIPKNFAGPVSQHNNRPGYHTQTAGPWHLGKLEMDFDFCEGTTVVVTEDCGNRGPSLRTTTASGKLITEWCCRSCTLPPLRYRGEDGCWYGMEIRPLKEKEENLVSSLVTAGHGQIDNFSLGILGMALFLEEMLRTRVGTKHAILLVAVSFVTLITGNMSFRDLGRVMVMVGATMTDDIGMGVTYLALLAAFKVRPTFAAGLLLRKLTSKELMMTTIGIVLLSQSSIPETILELTDALALGMMVLKMVRNMEKYQLAVTIMAILCVPNAVILQNAWKVSCTILAVVSVSPLFLTSSQQKADWIPLALTIKGLNPTAIFLTTLSRTSKKRSWPLNEAIMAVGMVSILASSLLKNDTPMTGPLVAGGLLTVCYVLTGRSADLELERATDVKWDDQAEISGSSPILSITISEDGSMSIKNEEEEQTLTILIRTGLLVISGLFPVSIPITAAAWYLWEVKKQRAGVLWDVPSPPPVGKAELEDGAYRIKQKGILGYSQIGAGVYKEGTFHTMWHVTRGAVLMHKGKRIEPSWADVKKDLISYGGGWKLEGEWKEGEEVQVLALEPGKNPRAVQTKPGLFRTNTGTIGAVSLDFSPGTSGSPIVDKKGKVVGLYGNGVVTRSGAYVSAIAQTEKSIEDNPEIEDDIFRKRRLTIMDLHPGAGKTKRYLPAIVREAIKRGLRTLILAPTRVVAAEMEEALRGLPIRYQTPAIRAEHTGREIVDLMCHATFTMRLLSPIRVPNYNLIIMDEAHFTDPASIAARGYISTRVEMGEAAGIFMTATPPGSRDPFPQSNAPIMDEEREIPERSWNSGHEWVTDFKGKTVWFVPSIKTGNDIAACLRKNGKRVIQLSRKTFDSEYVKTRTNDWDFVVTTDISEMGANFKAERVIDPRRCMKPVILTDGEERVILAGPMPVTHSSAAQRRGRIGRNPRNENDQYIYMGEPLENDEDCAHWKEAKMLLDNINTPEGIIPSMFEPEREKVDAIDGEYRLRGEARKTFVDLMRRGDLPVWLAYKVAAEGINYADRRWCFDGTRNNQILEENVEVEIWTKEGERKKLKPRWLDARIYSDPLALKEFAAGRKSLTLNLITEMGRLPTFMTQKARDALDNLAVLHTAEAGGKAYNHALSELPETLETLLLLTLLATVTGGIFLFLMSGRGIGKMTLGMCCIITASILLWYAQIQPHWIAASIILEFFLIVLLIPEPEKQRTPQDNQLTYVIIAILTVVAATMANEMGFLEKTKKDLGLGNIATQQPESNILDIDLRPASAWTLYAVATTFITPMLRHSIENSSVNVSLTAIANQATVLMGLGKGWPLSKMDIGVPLLAIGCYSQVNPITLTAALLLLVAHYAIIGPGLQAKATREAQKRAAAGIMKNPTVDGITVIDLDPIPYDPKFEKQLGQVMLLVLCVTQVLMMRTTWALCEALTLATGPVSTLWEGNPGRFWNTTIAVSMANIFRGSYLAGAGLLFSIMKNTTSTRRGTGNIGETLGEKWKSRLNALGKSEFQIYKKSGIQEVDRTLAKEGIKRGETDHHAVSRGSAKLRWFVERNLVTPEGKVVDLGCGRGGWSYYCGGLKNVREVKGLTKGGPGHEEPIPMSTYGWNLVRLQSGVDVFFVPPEKCDTLLCDIGESSPNPTVEAGRTLRVLNLVENWLNNNTQFCVKVLNPYMPSVIERMETLQRKYGGALVRNPLSRNSTHEMYWVSNASGNIVSSVNMISRMLINRFTMRHKKATYEPDVDLGSGTRNIGIESETPNLDIIGKRIEKIKQEHETSWHYDQDHPYKTWAYHGSYETKQTGSASSMVNGVVRLLTKPWDVVPMVTQMAMTDTTPFGQQRVFKEKVDTRTQEPKEGTKKLMKITAEWLWKELGKKKTPRMCTREEFTKKVRSNAALGAIFTDENKWKSAREAVEDSRFWELVDKERNLHLEGKCETCVYNMMGKREKKLGEFGKAKGSRAIWYMWLGARFLEFEALGFLNEDHWFSRENSLSGVEGEGLHKLGYILREVSKKEGGAMYADDTAGWDTRITIEDLKNEEMITNHMAGEHKKLAEAIFKLTYQNKVVRVQRPTPRGTVMDIISRRDQRGSGQVGTYGLNTFTNMEAQLIRQMEGEGIFKSIQHLTASEEIAVQDWLARVGRERLSRMAISGDDCVVKPLDDRFARALTALNDMGKVRKDIQQWEPSRGWNDWTQVPFCSHHFHELIMKDGRTLVVPCRNQDELIGRARISQGAGWSLRETACLGKSYAQMWSLMYFHRRDLRLAANAICSAVPSHWVPTSRTTWSIHASHEWMTTEDMLTVWNKVWILENPWMEDKTPVESWEEIPYLGKREDQWCGSLIGLTSRATWAKNIQTAINQVRSLIGNEEYTDYMPSMKRFRREEEEAGVLW</sequence>
<organism>
    <name type="scientific">Dengue virus type 2 (strain Puerto Rico/PR159-S1/1969)</name>
    <name type="common">DENV-2</name>
    <dbReference type="NCBI Taxonomy" id="11066"/>
    <lineage>
        <taxon>Viruses</taxon>
        <taxon>Riboviria</taxon>
        <taxon>Orthornavirae</taxon>
        <taxon>Kitrinoviricota</taxon>
        <taxon>Flasuviricetes</taxon>
        <taxon>Amarillovirales</taxon>
        <taxon>Flaviviridae</taxon>
        <taxon>Orthoflavivirus</taxon>
        <taxon>Orthoflavivirus denguei</taxon>
        <taxon>Dengue virus</taxon>
    </lineage>
</organism>
<keyword id="KW-0002">3D-structure</keyword>
<keyword id="KW-0007">Acetylation</keyword>
<keyword id="KW-1072">Activation of host autophagy by virus</keyword>
<keyword id="KW-0067">ATP-binding</keyword>
<keyword id="KW-0167">Capsid protein</keyword>
<keyword id="KW-1165">Clathrin-mediated endocytosis of virus by host</keyword>
<keyword id="KW-0165">Cleavage on pair of basic residues</keyword>
<keyword id="KW-1015">Disulfide bond</keyword>
<keyword id="KW-1170">Fusion of virus membrane with host endosomal membrane</keyword>
<keyword id="KW-1168">Fusion of virus membrane with host membrane</keyword>
<keyword id="KW-0325">Glycoprotein</keyword>
<keyword id="KW-0347">Helicase</keyword>
<keyword id="KW-1035">Host cytoplasm</keyword>
<keyword id="KW-1038">Host endoplasmic reticulum</keyword>
<keyword id="KW-1043">Host membrane</keyword>
<keyword id="KW-1045">Host mitochondrion</keyword>
<keyword id="KW-1048">Host nucleus</keyword>
<keyword id="KW-0945">Host-virus interaction</keyword>
<keyword id="KW-0378">Hydrolase</keyword>
<keyword id="KW-1090">Inhibition of host innate immune response by virus</keyword>
<keyword id="KW-1114">Inhibition of host interferon signaling pathway by virus</keyword>
<keyword id="KW-1097">Inhibition of host MAVS by virus</keyword>
<keyword id="KW-1113">Inhibition of host RLR pathway by virus</keyword>
<keyword id="KW-1106">Inhibition of host STAT2 by virus</keyword>
<keyword id="KW-1112">Inhibition of host TYK2 by virus</keyword>
<keyword id="KW-0922">Interferon antiviral system evasion</keyword>
<keyword id="KW-0407">Ion channel</keyword>
<keyword id="KW-0406">Ion transport</keyword>
<keyword id="KW-0472">Membrane</keyword>
<keyword id="KW-0479">Metal-binding</keyword>
<keyword id="KW-0489">Methyltransferase</keyword>
<keyword id="KW-0506">mRNA capping</keyword>
<keyword id="KW-0507">mRNA processing</keyword>
<keyword id="KW-0511">Multifunctional enzyme</keyword>
<keyword id="KW-0547">Nucleotide-binding</keyword>
<keyword id="KW-0548">Nucleotidyltransferase</keyword>
<keyword id="KW-0597">Phosphoprotein</keyword>
<keyword id="KW-0645">Protease</keyword>
<keyword id="KW-0694">RNA-binding</keyword>
<keyword id="KW-0696">RNA-directed RNA polymerase</keyword>
<keyword id="KW-0949">S-adenosyl-L-methionine</keyword>
<keyword id="KW-0964">Secreted</keyword>
<keyword id="KW-0720">Serine protease</keyword>
<keyword id="KW-0941">Suppressor of RNA silencing</keyword>
<keyword id="KW-0804">Transcription</keyword>
<keyword id="KW-0805">Transcription regulation</keyword>
<keyword id="KW-0808">Transferase</keyword>
<keyword id="KW-0812">Transmembrane</keyword>
<keyword id="KW-1133">Transmembrane helix</keyword>
<keyword id="KW-0813">Transport</keyword>
<keyword id="KW-0832">Ubl conjugation</keyword>
<keyword id="KW-1161">Viral attachment to host cell</keyword>
<keyword id="KW-0261">Viral envelope protein</keyword>
<keyword id="KW-0899">Viral immunoevasion</keyword>
<keyword id="KW-1182">Viral ion channel</keyword>
<keyword id="KW-1162">Viral penetration into host cytoplasm</keyword>
<keyword id="KW-0693">Viral RNA replication</keyword>
<keyword id="KW-0946">Virion</keyword>
<keyword id="KW-1164">Virus endocytosis by host</keyword>
<keyword id="KW-1160">Virus entry into host cell</keyword>
<keyword id="KW-0862">Zinc</keyword>